<sequence length="400" mass="44779">MDSSAAPTNASNCTDALAYSSCSPAPSPGSWVNLSHLDGNLSDPCGPNRTDLGGRDSLCPPTGSPSMITAITIMALYSIVCVVGLFGNFLVMYVIVRYTKMKTATNIYIFNLALADALATSTLPFQSVNYLMGTWPFGTILCKIVISIDYYNMFTSIFTLCTMSVDRYIAVCHPVKALDFRTPRNAKIINVCNWILSSAIGLPVMFMATTKYRQGSIDCTLTFSHPTWYWENLLKICVFIFAFIMPVLIITVCYGLMILRLKSVRMLSGSKEKDRNLRRITRMVLVVVAVFIVCWTPIHIYVIIKALVTIPETTFQTVSWHFCIALGYTNSCLNPVLYAFLDENFKRCFREFCIPTSSNIEQQNSTRIRQNTRDHPSTANTVDRTNHQLENLEAETAPLP</sequence>
<proteinExistence type="evidence at protein level"/>
<gene>
    <name type="primary">OPRM1</name>
    <name type="synonym">MOR1</name>
</gene>
<keyword id="KW-0002">3D-structure</keyword>
<keyword id="KW-0025">Alternative splicing</keyword>
<keyword id="KW-1003">Cell membrane</keyword>
<keyword id="KW-0966">Cell projection</keyword>
<keyword id="KW-0963">Cytoplasm</keyword>
<keyword id="KW-1015">Disulfide bond</keyword>
<keyword id="KW-0967">Endosome</keyword>
<keyword id="KW-0297">G-protein coupled receptor</keyword>
<keyword id="KW-0325">Glycoprotein</keyword>
<keyword id="KW-0449">Lipoprotein</keyword>
<keyword id="KW-0472">Membrane</keyword>
<keyword id="KW-0564">Palmitate</keyword>
<keyword id="KW-0597">Phosphoprotein</keyword>
<keyword id="KW-1267">Proteomics identification</keyword>
<keyword id="KW-0675">Receptor</keyword>
<keyword id="KW-1185">Reference proteome</keyword>
<keyword id="KW-0807">Transducer</keyword>
<keyword id="KW-0812">Transmembrane</keyword>
<keyword id="KW-1133">Transmembrane helix</keyword>
<keyword id="KW-0832">Ubl conjugation</keyword>
<name>OPRM_HUMAN</name>
<reference key="1">
    <citation type="journal article" date="1994" name="FEBS Lett.">
        <title>Human mu opiate receptor. cDNA and genomic clones, pharmacologic characterization and chromosomal assignment.</title>
        <authorList>
            <person name="Wang J.-B."/>
            <person name="Johnson P.S."/>
            <person name="Persico A.M."/>
            <person name="Hawkins A.L."/>
            <person name="Griffin C.A."/>
            <person name="Uhl G.R."/>
        </authorList>
    </citation>
    <scope>NUCLEOTIDE SEQUENCE [MRNA] (ISOFORM 1)</scope>
    <scope>FUNCTION</scope>
    <scope>SUBCELLULAR LOCATION</scope>
    <source>
        <tissue>Brain</tissue>
    </source>
</reference>
<reference key="2">
    <citation type="journal article" date="1994" name="FEBS Lett.">
        <title>Expression of two variants of the human mu opioid receptor mRNA in SK-N-SH cells and human brain.</title>
        <authorList>
            <person name="Bare L.A."/>
            <person name="Mansson E."/>
            <person name="Yang D."/>
        </authorList>
    </citation>
    <scope>NUCLEOTIDE SEQUENCE [MRNA] (ISOFORM 2)</scope>
    <scope>VARIANT ASP-40</scope>
    <scope>FUNCTION</scope>
    <scope>SUBCELLULAR LOCATION</scope>
    <source>
        <tissue>Brain</tissue>
    </source>
</reference>
<reference key="3">
    <citation type="journal article" date="1995" name="J. Neurosci.">
        <title>The human mu opioid receptor: modulation of functional desensitization by calcium/calmodulin-dependent protein kinase and protein kinase C.</title>
        <authorList>
            <person name="Mestek A. Jr."/>
            <person name="Hurley J.H."/>
            <person name="Bye L.S."/>
            <person name="Campbell A.D."/>
            <person name="Chen Y."/>
            <person name="Tian M."/>
            <person name="Liu J."/>
            <person name="Schulman H."/>
            <person name="Yu L."/>
        </authorList>
    </citation>
    <scope>NUCLEOTIDE SEQUENCE [MRNA] (ISOFORM 1)</scope>
    <scope>FUNCTION</scope>
    <scope>SUBCELLULAR LOCATION</scope>
    <source>
        <tissue>Brain</tissue>
    </source>
</reference>
<reference key="4">
    <citation type="journal article" date="2003" name="Biochem. Biophys. Res. Commun.">
        <title>Identification and characterization of two new human mu opioid receptor splice variants, hMOR-1O and hMOR-1X.</title>
        <authorList>
            <person name="Pan Y.X."/>
            <person name="Xu J."/>
            <person name="Mahurter L."/>
            <person name="Xu M."/>
            <person name="Gilbert A.K."/>
            <person name="Pasternak G.W."/>
        </authorList>
    </citation>
    <scope>NUCLEOTIDE SEQUENCE [MRNA] (ISOFORMS 3 AND 5)</scope>
    <scope>FUNCTION</scope>
    <scope>SUBCELLULAR LOCATION</scope>
</reference>
<reference key="5">
    <citation type="journal article" date="2003" name="J. Immunol.">
        <title>Molecular identification and functional expression of mu 3, a novel alternatively spliced variant of the human mu opiate receptor gene.</title>
        <authorList>
            <person name="Cadet P."/>
            <person name="Mantione K.J."/>
            <person name="Stefano G.B."/>
        </authorList>
    </citation>
    <scope>NUCLEOTIDE SEQUENCE [MRNA] (ISOFORM 14)</scope>
    <scope>FUNCTION</scope>
    <scope>SUBCELLULAR LOCATION</scope>
</reference>
<reference key="6">
    <citation type="journal article" date="2005" name="Neuroscience">
        <title>Identification and characterization of six new alternatively spliced variants of the human mu opioid receptor gene, Oprm.</title>
        <authorList>
            <person name="Pan L."/>
            <person name="Xu J."/>
            <person name="Yu R."/>
            <person name="Xu M.-M."/>
            <person name="Pan Y.-X."/>
            <person name="Pasternak G.W."/>
        </authorList>
    </citation>
    <scope>NUCLEOTIDE SEQUENCE [MRNA] (ISOFORMS 2; 4; 6; 7; 8; 9 AND 11)</scope>
    <scope>VARIANT 411-GLN--VAL-420 DEL (ISOFORM 9)</scope>
</reference>
<reference key="7">
    <citation type="journal article" date="2009" name="J. Neurochem.">
        <title>Isolation and characterization of new exon 11-associated N-terminal splice variants of the human mu opioid receptor gene.</title>
        <authorList>
            <person name="Xu J."/>
            <person name="Xu M."/>
            <person name="Hurd Y.L."/>
            <person name="Pasternak G.W."/>
            <person name="Pan Y.X."/>
        </authorList>
    </citation>
    <scope>NUCLEOTIDE SEQUENCE [MRNA] (ISOFORMS 10; 12 AND 13)</scope>
</reference>
<reference key="8">
    <citation type="submission" date="2003-08" db="EMBL/GenBank/DDBJ databases">
        <title>Novel variants of the human mu opioid receptor are generated by alternative splicing and transcription from different positions in the OPRM1 gene.</title>
        <authorList>
            <person name="Baar C."/>
            <person name="Kvam T.-M."/>
            <person name="Rakvag T.T."/>
            <person name="Kaasa S."/>
            <person name="Skorpen F."/>
        </authorList>
    </citation>
    <scope>NUCLEOTIDE SEQUENCE [MRNA] (ISOFORMS 6 AND 15)</scope>
    <source>
        <tissue>Brain</tissue>
    </source>
</reference>
<reference key="9">
    <citation type="submission" date="2010-12" db="EMBL/GenBank/DDBJ databases">
        <title>Isolation and expression of alternatively spliced variants encoding proteins with single transmembrane domain in mu opioid receptor genes.</title>
        <authorList>
            <person name="Xu J."/>
            <person name="Pasternak G.W."/>
            <person name="Pan Y."/>
        </authorList>
    </citation>
    <scope>NUCLEOTIDE SEQUENCE [MRNA] (ISOFORM 18)</scope>
</reference>
<reference key="10">
    <citation type="journal article" date="2009" name="Hum. Mol. Genet.">
        <title>Expansion of the human mu-opioid receptor gene architecture: novel functional variants.</title>
        <authorList>
            <person name="Shabalina S.A."/>
            <person name="Zaykin D.V."/>
            <person name="Gris P."/>
            <person name="Ogurtsov A.Y."/>
            <person name="Gauthier J."/>
            <person name="Shibata K."/>
            <person name="Tchivileva I.E."/>
            <person name="Belfer I."/>
            <person name="Mishra B."/>
            <person name="Kiselycznyk C."/>
            <person name="Wallace M.R."/>
            <person name="Staud R."/>
            <person name="Spiridonov N.A."/>
            <person name="Max M.B."/>
            <person name="Goldman D."/>
            <person name="Fillingim R.B."/>
            <person name="Maixner W."/>
            <person name="Diatchenko L."/>
        </authorList>
    </citation>
    <scope>NUCLEOTIDE SEQUENCE [MRNA] (ISOFORM 12)</scope>
    <source>
        <tissue>Brain</tissue>
    </source>
</reference>
<reference key="11">
    <citation type="journal article" date="2004" name="Nat. Genet.">
        <title>Complete sequencing and characterization of 21,243 full-length human cDNAs.</title>
        <authorList>
            <person name="Ota T."/>
            <person name="Suzuki Y."/>
            <person name="Nishikawa T."/>
            <person name="Otsuki T."/>
            <person name="Sugiyama T."/>
            <person name="Irie R."/>
            <person name="Wakamatsu A."/>
            <person name="Hayashi K."/>
            <person name="Sato H."/>
            <person name="Nagai K."/>
            <person name="Kimura K."/>
            <person name="Makita H."/>
            <person name="Sekine M."/>
            <person name="Obayashi M."/>
            <person name="Nishi T."/>
            <person name="Shibahara T."/>
            <person name="Tanaka T."/>
            <person name="Ishii S."/>
            <person name="Yamamoto J."/>
            <person name="Saito K."/>
            <person name="Kawai Y."/>
            <person name="Isono Y."/>
            <person name="Nakamura Y."/>
            <person name="Nagahari K."/>
            <person name="Murakami K."/>
            <person name="Yasuda T."/>
            <person name="Iwayanagi T."/>
            <person name="Wagatsuma M."/>
            <person name="Shiratori A."/>
            <person name="Sudo H."/>
            <person name="Hosoiri T."/>
            <person name="Kaku Y."/>
            <person name="Kodaira H."/>
            <person name="Kondo H."/>
            <person name="Sugawara M."/>
            <person name="Takahashi M."/>
            <person name="Kanda K."/>
            <person name="Yokoi T."/>
            <person name="Furuya T."/>
            <person name="Kikkawa E."/>
            <person name="Omura Y."/>
            <person name="Abe K."/>
            <person name="Kamihara K."/>
            <person name="Katsuta N."/>
            <person name="Sato K."/>
            <person name="Tanikawa M."/>
            <person name="Yamazaki M."/>
            <person name="Ninomiya K."/>
            <person name="Ishibashi T."/>
            <person name="Yamashita H."/>
            <person name="Murakawa K."/>
            <person name="Fujimori K."/>
            <person name="Tanai H."/>
            <person name="Kimata M."/>
            <person name="Watanabe M."/>
            <person name="Hiraoka S."/>
            <person name="Chiba Y."/>
            <person name="Ishida S."/>
            <person name="Ono Y."/>
            <person name="Takiguchi S."/>
            <person name="Watanabe S."/>
            <person name="Yosida M."/>
            <person name="Hotuta T."/>
            <person name="Kusano J."/>
            <person name="Kanehori K."/>
            <person name="Takahashi-Fujii A."/>
            <person name="Hara H."/>
            <person name="Tanase T.-O."/>
            <person name="Nomura Y."/>
            <person name="Togiya S."/>
            <person name="Komai F."/>
            <person name="Hara R."/>
            <person name="Takeuchi K."/>
            <person name="Arita M."/>
            <person name="Imose N."/>
            <person name="Musashino K."/>
            <person name="Yuuki H."/>
            <person name="Oshima A."/>
            <person name="Sasaki N."/>
            <person name="Aotsuka S."/>
            <person name="Yoshikawa Y."/>
            <person name="Matsunawa H."/>
            <person name="Ichihara T."/>
            <person name="Shiohata N."/>
            <person name="Sano S."/>
            <person name="Moriya S."/>
            <person name="Momiyama H."/>
            <person name="Satoh N."/>
            <person name="Takami S."/>
            <person name="Terashima Y."/>
            <person name="Suzuki O."/>
            <person name="Nakagawa S."/>
            <person name="Senoh A."/>
            <person name="Mizoguchi H."/>
            <person name="Goto Y."/>
            <person name="Shimizu F."/>
            <person name="Wakebe H."/>
            <person name="Hishigaki H."/>
            <person name="Watanabe T."/>
            <person name="Sugiyama A."/>
            <person name="Takemoto M."/>
            <person name="Kawakami B."/>
            <person name="Yamazaki M."/>
            <person name="Watanabe K."/>
            <person name="Kumagai A."/>
            <person name="Itakura S."/>
            <person name="Fukuzumi Y."/>
            <person name="Fujimori Y."/>
            <person name="Komiyama M."/>
            <person name="Tashiro H."/>
            <person name="Tanigami A."/>
            <person name="Fujiwara T."/>
            <person name="Ono T."/>
            <person name="Yamada K."/>
            <person name="Fujii Y."/>
            <person name="Ozaki K."/>
            <person name="Hirao M."/>
            <person name="Ohmori Y."/>
            <person name="Kawabata A."/>
            <person name="Hikiji T."/>
            <person name="Kobatake N."/>
            <person name="Inagaki H."/>
            <person name="Ikema Y."/>
            <person name="Okamoto S."/>
            <person name="Okitani R."/>
            <person name="Kawakami T."/>
            <person name="Noguchi S."/>
            <person name="Itoh T."/>
            <person name="Shigeta K."/>
            <person name="Senba T."/>
            <person name="Matsumura K."/>
            <person name="Nakajima Y."/>
            <person name="Mizuno T."/>
            <person name="Morinaga M."/>
            <person name="Sasaki M."/>
            <person name="Togashi T."/>
            <person name="Oyama M."/>
            <person name="Hata H."/>
            <person name="Watanabe M."/>
            <person name="Komatsu T."/>
            <person name="Mizushima-Sugano J."/>
            <person name="Satoh T."/>
            <person name="Shirai Y."/>
            <person name="Takahashi Y."/>
            <person name="Nakagawa K."/>
            <person name="Okumura K."/>
            <person name="Nagase T."/>
            <person name="Nomura N."/>
            <person name="Kikuchi H."/>
            <person name="Masuho Y."/>
            <person name="Yamashita R."/>
            <person name="Nakai K."/>
            <person name="Yada T."/>
            <person name="Nakamura Y."/>
            <person name="Ohara O."/>
            <person name="Isogai T."/>
            <person name="Sugano S."/>
        </authorList>
    </citation>
    <scope>NUCLEOTIDE SEQUENCE [LARGE SCALE MRNA] (ISOFORM 1)</scope>
    <source>
        <tissue>Brain</tissue>
    </source>
</reference>
<reference key="12">
    <citation type="submission" date="2004-01" db="EMBL/GenBank/DDBJ databases">
        <title>cDNA clones of human proteins involved in signal transduction sequenced by the Guthrie cDNA resource center (www.cdna.org).</title>
        <authorList>
            <person name="Kopatz S.A."/>
            <person name="Aronstam R.S."/>
            <person name="Sharma S.V."/>
        </authorList>
    </citation>
    <scope>NUCLEOTIDE SEQUENCE [LARGE SCALE MRNA] (ISOFORM 1)</scope>
    <source>
        <tissue>Brain</tissue>
    </source>
</reference>
<reference key="13">
    <citation type="submission" date="2006-11" db="EMBL/GenBank/DDBJ databases">
        <authorList>
            <consortium name="NIEHS SNPs program"/>
        </authorList>
    </citation>
    <scope>NUCLEOTIDE SEQUENCE [GENOMIC DNA]</scope>
    <scope>VARIANTS VAL-6; ASP-40; CYS-147; ASP-152; CYS-265 AND ASN-274</scope>
</reference>
<reference key="14">
    <citation type="submission" date="2008-08" db="EMBL/GenBank/DDBJ databases">
        <title>Isolation and characterization of two alternatively spliced variants from the human mu opioid receptor, OPRM1, gene.</title>
        <authorList>
            <person name="Xu J."/>
            <person name="Xu M."/>
            <person name="Pasternak G.W."/>
            <person name="Pan Y."/>
        </authorList>
    </citation>
    <scope>NUCLEOTIDE SEQUENCE [MRNA] (ISOFORMS 6 AND 10)</scope>
</reference>
<reference key="15">
    <citation type="journal article" date="2003" name="Nature">
        <title>The DNA sequence and analysis of human chromosome 6.</title>
        <authorList>
            <person name="Mungall A.J."/>
            <person name="Palmer S.A."/>
            <person name="Sims S.K."/>
            <person name="Edwards C.A."/>
            <person name="Ashurst J.L."/>
            <person name="Wilming L."/>
            <person name="Jones M.C."/>
            <person name="Horton R."/>
            <person name="Hunt S.E."/>
            <person name="Scott C.E."/>
            <person name="Gilbert J.G.R."/>
            <person name="Clamp M.E."/>
            <person name="Bethel G."/>
            <person name="Milne S."/>
            <person name="Ainscough R."/>
            <person name="Almeida J.P."/>
            <person name="Ambrose K.D."/>
            <person name="Andrews T.D."/>
            <person name="Ashwell R.I.S."/>
            <person name="Babbage A.K."/>
            <person name="Bagguley C.L."/>
            <person name="Bailey J."/>
            <person name="Banerjee R."/>
            <person name="Barker D.J."/>
            <person name="Barlow K.F."/>
            <person name="Bates K."/>
            <person name="Beare D.M."/>
            <person name="Beasley H."/>
            <person name="Beasley O."/>
            <person name="Bird C.P."/>
            <person name="Blakey S.E."/>
            <person name="Bray-Allen S."/>
            <person name="Brook J."/>
            <person name="Brown A.J."/>
            <person name="Brown J.Y."/>
            <person name="Burford D.C."/>
            <person name="Burrill W."/>
            <person name="Burton J."/>
            <person name="Carder C."/>
            <person name="Carter N.P."/>
            <person name="Chapman J.C."/>
            <person name="Clark S.Y."/>
            <person name="Clark G."/>
            <person name="Clee C.M."/>
            <person name="Clegg S."/>
            <person name="Cobley V."/>
            <person name="Collier R.E."/>
            <person name="Collins J.E."/>
            <person name="Colman L.K."/>
            <person name="Corby N.R."/>
            <person name="Coville G.J."/>
            <person name="Culley K.M."/>
            <person name="Dhami P."/>
            <person name="Davies J."/>
            <person name="Dunn M."/>
            <person name="Earthrowl M.E."/>
            <person name="Ellington A.E."/>
            <person name="Evans K.A."/>
            <person name="Faulkner L."/>
            <person name="Francis M.D."/>
            <person name="Frankish A."/>
            <person name="Frankland J."/>
            <person name="French L."/>
            <person name="Garner P."/>
            <person name="Garnett J."/>
            <person name="Ghori M.J."/>
            <person name="Gilby L.M."/>
            <person name="Gillson C.J."/>
            <person name="Glithero R.J."/>
            <person name="Grafham D.V."/>
            <person name="Grant M."/>
            <person name="Gribble S."/>
            <person name="Griffiths C."/>
            <person name="Griffiths M.N.D."/>
            <person name="Hall R."/>
            <person name="Halls K.S."/>
            <person name="Hammond S."/>
            <person name="Harley J.L."/>
            <person name="Hart E.A."/>
            <person name="Heath P.D."/>
            <person name="Heathcott R."/>
            <person name="Holmes S.J."/>
            <person name="Howden P.J."/>
            <person name="Howe K.L."/>
            <person name="Howell G.R."/>
            <person name="Huckle E."/>
            <person name="Humphray S.J."/>
            <person name="Humphries M.D."/>
            <person name="Hunt A.R."/>
            <person name="Johnson C.M."/>
            <person name="Joy A.A."/>
            <person name="Kay M."/>
            <person name="Keenan S.J."/>
            <person name="Kimberley A.M."/>
            <person name="King A."/>
            <person name="Laird G.K."/>
            <person name="Langford C."/>
            <person name="Lawlor S."/>
            <person name="Leongamornlert D.A."/>
            <person name="Leversha M."/>
            <person name="Lloyd C.R."/>
            <person name="Lloyd D.M."/>
            <person name="Loveland J.E."/>
            <person name="Lovell J."/>
            <person name="Martin S."/>
            <person name="Mashreghi-Mohammadi M."/>
            <person name="Maslen G.L."/>
            <person name="Matthews L."/>
            <person name="McCann O.T."/>
            <person name="McLaren S.J."/>
            <person name="McLay K."/>
            <person name="McMurray A."/>
            <person name="Moore M.J.F."/>
            <person name="Mullikin J.C."/>
            <person name="Niblett D."/>
            <person name="Nickerson T."/>
            <person name="Novik K.L."/>
            <person name="Oliver K."/>
            <person name="Overton-Larty E.K."/>
            <person name="Parker A."/>
            <person name="Patel R."/>
            <person name="Pearce A.V."/>
            <person name="Peck A.I."/>
            <person name="Phillimore B.J.C.T."/>
            <person name="Phillips S."/>
            <person name="Plumb R.W."/>
            <person name="Porter K.M."/>
            <person name="Ramsey Y."/>
            <person name="Ranby S.A."/>
            <person name="Rice C.M."/>
            <person name="Ross M.T."/>
            <person name="Searle S.M."/>
            <person name="Sehra H.K."/>
            <person name="Sheridan E."/>
            <person name="Skuce C.D."/>
            <person name="Smith S."/>
            <person name="Smith M."/>
            <person name="Spraggon L."/>
            <person name="Squares S.L."/>
            <person name="Steward C.A."/>
            <person name="Sycamore N."/>
            <person name="Tamlyn-Hall G."/>
            <person name="Tester J."/>
            <person name="Theaker A.J."/>
            <person name="Thomas D.W."/>
            <person name="Thorpe A."/>
            <person name="Tracey A."/>
            <person name="Tromans A."/>
            <person name="Tubby B."/>
            <person name="Wall M."/>
            <person name="Wallis J.M."/>
            <person name="West A.P."/>
            <person name="White S.S."/>
            <person name="Whitehead S.L."/>
            <person name="Whittaker H."/>
            <person name="Wild A."/>
            <person name="Willey D.J."/>
            <person name="Wilmer T.E."/>
            <person name="Wood J.M."/>
            <person name="Wray P.W."/>
            <person name="Wyatt J.C."/>
            <person name="Young L."/>
            <person name="Younger R.M."/>
            <person name="Bentley D.R."/>
            <person name="Coulson A."/>
            <person name="Durbin R.M."/>
            <person name="Hubbard T."/>
            <person name="Sulston J.E."/>
            <person name="Dunham I."/>
            <person name="Rogers J."/>
            <person name="Beck S."/>
        </authorList>
    </citation>
    <scope>NUCLEOTIDE SEQUENCE [LARGE SCALE GENOMIC DNA]</scope>
</reference>
<reference key="16">
    <citation type="submission" date="2005-09" db="EMBL/GenBank/DDBJ databases">
        <authorList>
            <person name="Mural R.J."/>
            <person name="Istrail S."/>
            <person name="Sutton G.G."/>
            <person name="Florea L."/>
            <person name="Halpern A.L."/>
            <person name="Mobarry C.M."/>
            <person name="Lippert R."/>
            <person name="Walenz B."/>
            <person name="Shatkay H."/>
            <person name="Dew I."/>
            <person name="Miller J.R."/>
            <person name="Flanigan M.J."/>
            <person name="Edwards N.J."/>
            <person name="Bolanos R."/>
            <person name="Fasulo D."/>
            <person name="Halldorsson B.V."/>
            <person name="Hannenhalli S."/>
            <person name="Turner R."/>
            <person name="Yooseph S."/>
            <person name="Lu F."/>
            <person name="Nusskern D.R."/>
            <person name="Shue B.C."/>
            <person name="Zheng X.H."/>
            <person name="Zhong F."/>
            <person name="Delcher A.L."/>
            <person name="Huson D.H."/>
            <person name="Kravitz S.A."/>
            <person name="Mouchard L."/>
            <person name="Reinert K."/>
            <person name="Remington K.A."/>
            <person name="Clark A.G."/>
            <person name="Waterman M.S."/>
            <person name="Eichler E.E."/>
            <person name="Adams M.D."/>
            <person name="Hunkapiller M.W."/>
            <person name="Myers E.W."/>
            <person name="Venter J.C."/>
        </authorList>
    </citation>
    <scope>NUCLEOTIDE SEQUENCE [LARGE SCALE GENOMIC DNA]</scope>
</reference>
<reference key="17">
    <citation type="journal article" date="2004" name="Genome Res.">
        <title>The status, quality, and expansion of the NIH full-length cDNA project: the Mammalian Gene Collection (MGC).</title>
        <authorList>
            <consortium name="The MGC Project Team"/>
        </authorList>
    </citation>
    <scope>NUCLEOTIDE SEQUENCE [LARGE SCALE MRNA] (ISOFORM 1)</scope>
</reference>
<reference key="18">
    <citation type="submission" date="2003-05" db="EMBL/GenBank/DDBJ databases">
        <title>An homozygous Ala 6 Val (GCC-&gt;GTC) mutation was detected on human mu opioid receptor gene of an African American individual with sickle cell anemia.</title>
        <authorList>
            <person name="Metha S."/>
            <person name="Glendenning M."/>
            <person name="Kutlar A."/>
            <person name="Kutlar F."/>
        </authorList>
    </citation>
    <scope>NUCLEOTIDE SEQUENCE [GENOMIC DNA] OF 1-20</scope>
    <scope>VARIANT VAL-6</scope>
    <source>
        <tissue>Blood</tissue>
    </source>
</reference>
<reference key="19">
    <citation type="journal article" date="1999" name="Proc. Natl. Acad. Sci. U.S.A.">
        <title>The mu opiate receptor as a candidate gene for pain: polymorphisms, variations in expression, nociception, and opiate responses.</title>
        <authorList>
            <person name="Uhl G.R."/>
            <person name="Sora I."/>
            <person name="Wang Z."/>
        </authorList>
    </citation>
    <scope>NUCLEOTIDE SEQUENCE [GENOMIC DNA] OF 1-47</scope>
</reference>
<reference key="20">
    <citation type="journal article" date="1995" name="Biochem. Biophys. Res. Commun.">
        <title>Mu opioid receptor gene expression in immune cells.</title>
        <authorList>
            <person name="Chuang T.K."/>
            <person name="Killam K.F. Jr."/>
            <person name="Chuang L.F."/>
            <person name="Kung H.F."/>
            <person name="Sheng W.S."/>
            <person name="Chao C.C."/>
            <person name="Yu L."/>
            <person name="Chuang R.Y."/>
        </authorList>
    </citation>
    <scope>NUCLEOTIDE SEQUENCE [GENOMIC DNA] OF 229-374</scope>
</reference>
<reference key="21">
    <citation type="journal article" date="2003" name="J. Biol. Chem.">
        <title>ADP-ribosylation factor-dependent phospholipase D2 activation is required for agonist-induced mu-opioid receptor endocytosis.</title>
        <authorList>
            <person name="Koch T."/>
            <person name="Brandenburg L.O."/>
            <person name="Schulz S."/>
            <person name="Liang Y."/>
            <person name="Klein J."/>
            <person name="Hollt V."/>
        </authorList>
    </citation>
    <scope>INTERACTION WITH PLD2</scope>
</reference>
<reference key="22">
    <citation type="journal article" date="1999" name="Brain Res. Mol. Brain Res.">
        <title>Mutation of human mu opioid receptor extracellular 'disulfide cysteine' residues alters ligand binding but does not prevent receptor targeting to the cell plasma membrane.</title>
        <authorList>
            <person name="Zhang P."/>
            <person name="Johnson P.S."/>
            <person name="Zollner C."/>
            <person name="Wang W."/>
            <person name="Wang Z."/>
            <person name="Montes A.E."/>
            <person name="Seidleck B.K."/>
            <person name="Blaschak C.J."/>
            <person name="Surratt C.K."/>
        </authorList>
    </citation>
    <scope>MUTAGENESIS OF CYS-142 AND CYS-219</scope>
    <scope>FUNCTION</scope>
    <scope>SUBCELLULAR LOCATION</scope>
</reference>
<reference key="23">
    <citation type="journal article" date="1999" name="J. Biol. Chem.">
        <title>Calmodulin binding to G protein-coupling domain of opioid receptors.</title>
        <authorList>
            <person name="Wang D."/>
            <person name="Sadee W."/>
            <person name="Quillan J.M."/>
        </authorList>
    </citation>
    <scope>INTERACTION WITH CALMODULIN</scope>
    <scope>MUTAGENESIS OF LYS-273</scope>
</reference>
<reference key="24">
    <citation type="journal article" date="2000" name="Annu. Rev. Pharmacol. Toxicol.">
        <title>Molecular mechanisms and regulation of opioid receptor signaling.</title>
        <authorList>
            <person name="Law P.Y."/>
            <person name="Wong Y.H."/>
            <person name="Loh H.H."/>
        </authorList>
    </citation>
    <scope>REVIEW</scope>
</reference>
<reference key="25">
    <citation type="journal article" date="2000" name="J. Neurochem.">
        <title>Calmodulin regulation of basal and agonist-stimulated G protein coupling by the mu-opioid receptor (OP(3)) in morphine-pretreated cell.</title>
        <authorList>
            <person name="Wang D."/>
            <person name="Surratt C.K."/>
            <person name="Sadee W."/>
        </authorList>
    </citation>
    <scope>INTERACTION WITH CALMODULIN</scope>
    <scope>MUTAGENESIS OF LYS-273 AND ARG-275</scope>
</reference>
<reference key="26">
    <citation type="journal article" date="2002" name="Exp. Cell Res.">
        <title>Interactions of opioid and chemokine receptors: oligomerization of mu, kappa, and delta with CCR5 on immune cells.</title>
        <authorList>
            <person name="Suzuki S."/>
            <person name="Chuang L.F."/>
            <person name="Yau P."/>
            <person name="Doi R.H."/>
            <person name="Chuang R.Y."/>
        </authorList>
    </citation>
    <scope>RECEPTOR HETEROOLIGOMERIZATION</scope>
    <scope>INTERACTION WITH CCR5</scope>
</reference>
<reference key="27">
    <citation type="journal article" date="2002" name="J. Neurochem.">
        <title>Agonists activate Gi1 alpha or Gi2 alpha fused to the human mu opioid receptor differently.</title>
        <authorList>
            <person name="Massotte D."/>
            <person name="Brillet K."/>
            <person name="Kieffer B."/>
            <person name="Milligan G."/>
        </authorList>
    </citation>
    <scope>FUNCTION</scope>
    <scope>COUPLING TO GNAI1 AND GNAI2</scope>
</reference>
<reference key="28">
    <citation type="journal article" date="2003" name="J. Biol. Chem.">
        <title>Selective interactions between helix VIII of the human mu-opioid receptors and the C terminus of periplakin disrupt G protein activation.</title>
        <authorList>
            <person name="Feng G.J."/>
            <person name="Kellett E."/>
            <person name="Scorer C.A."/>
            <person name="Wilde J."/>
            <person name="White J.H."/>
            <person name="Milligan G."/>
        </authorList>
    </citation>
    <scope>INTERACTION WITH PPL</scope>
</reference>
<reference key="29">
    <citation type="journal article" date="2003" name="Mol. Pharmacol.">
        <title>Interaction between the mu opioid receptor and filamin A is involved in receptor regulation and trafficking.</title>
        <authorList>
            <person name="Onoprishvili I."/>
            <person name="Andria M.L."/>
            <person name="Kramer H.K."/>
            <person name="Ancevska-Taneva N."/>
            <person name="Hiller J.M."/>
            <person name="Simon E.J."/>
        </authorList>
    </citation>
    <scope>INTERACTION WITH FLNA</scope>
</reference>
<reference key="30">
    <citation type="journal article" date="2005" name="Mol. Pharmacol.">
        <title>Opioid receptor homo- and heterodimerization in living cells by quantitative bioluminescence resonance energy transfer.</title>
        <authorList>
            <person name="Wang D."/>
            <person name="Sun X."/>
            <person name="Bohn L.M."/>
            <person name="Sadee W."/>
        </authorList>
    </citation>
    <scope>HOMOOLIGOMERIZATION</scope>
    <scope>RECEPTOR HETEROOLIGOMERIZATION</scope>
    <scope>INTERACTION WITH OPRD1 AND OPRK1</scope>
</reference>
<reference key="31">
    <citation type="journal article" date="2005" name="Mol. Pharmacol.">
        <title>Functional complementation and the analysis of opioid receptor homodimerization.</title>
        <authorList>
            <person name="Pascal G."/>
            <person name="Milligan G."/>
        </authorList>
    </citation>
    <scope>HOMOOLIGOMERIZATION</scope>
</reference>
<reference key="32">
    <citation type="journal article" date="2006" name="Biochem. Biophys. Res. Commun.">
        <title>The opioid ligand binding of human mu-opioid receptor is modulated by novel splice variants of the receptor.</title>
        <authorList>
            <person name="Choi H.S."/>
            <person name="Kim C.S."/>
            <person name="Hwang C.K."/>
            <person name="Song K.Y."/>
            <person name="Wang W."/>
            <person name="Qiu Y."/>
            <person name="Law P.Y."/>
            <person name="Wei L.N."/>
            <person name="Loh H.H."/>
        </authorList>
    </citation>
    <scope>ALTERNATIVE SPLICING (ISOFORMS 16 AND 17)</scope>
    <scope>FUNCTION (ISOFORMS 16 AND 17)</scope>
    <scope>SUBCELLULAR LOCATION</scope>
    <scope>TISSUE SPECIFICITY</scope>
    <scope>SUBUNIT</scope>
</reference>
<reference key="33">
    <citation type="journal article" date="2006" name="Brain Res.">
        <title>A member of the heat shock protein 40 family, hlj1, binds to the carboxyl tail of the human mu opioid receptor.</title>
        <authorList>
            <person name="Ancevska-Taneva N."/>
            <person name="Onoprishvili I."/>
            <person name="Andria M.L."/>
            <person name="Hiller J.M."/>
            <person name="Simon E.J."/>
        </authorList>
    </citation>
    <scope>INTERACTION WITH DNAJB4</scope>
</reference>
<reference key="34">
    <citation type="journal article" date="2007" name="J. Biol. Chem.">
        <title>Physical association between neuropeptide FF and micro-opioid receptors as a possible molecular basis for anti-opioid activity.</title>
        <authorList>
            <person name="Roumy M."/>
            <person name="Lorenzo C."/>
            <person name="Mazeres S."/>
            <person name="Bouchet S."/>
            <person name="Zajac J.M."/>
            <person name="Mollereau C."/>
        </authorList>
    </citation>
    <scope>RECEPTOR HETEROOLIGOMERIZATION</scope>
    <scope>INTERACTION WITH NPFFR2</scope>
</reference>
<reference key="35">
    <citation type="journal article" date="2009" name="Cell. Mol. Life Sci.">
        <title>Membrane functional organisation and dynamic of mu-opioid receptors.</title>
        <authorList>
            <person name="Lopez A."/>
            <person name="Salome L."/>
        </authorList>
    </citation>
    <scope>REVIEW</scope>
</reference>
<reference key="36">
    <citation type="journal article" date="2009" name="Neurosci. Lett.">
        <title>Regulation of mu opioid receptor internalization by the scaffold protein RanBPM.</title>
        <authorList>
            <person name="Talbot J.N."/>
            <person name="Skifter D.A."/>
            <person name="Bianchi E."/>
            <person name="Monaghan D.T."/>
            <person name="Toews M.L."/>
            <person name="Murrin L.C."/>
        </authorList>
    </citation>
    <scope>INTERACTION WITH RANBP9</scope>
</reference>
<reference key="37">
    <citation type="journal article" date="2010" name="BMC Neurosci.">
        <title>Interaction of the mu-opioid receptor with GPR177 (Wntless) inhibits Wnt secretion: potential implications for opioid dependence.</title>
        <authorList>
            <person name="Jin J."/>
            <person name="Kittanakom S."/>
            <person name="Wong V."/>
            <person name="Reyes B.A."/>
            <person name="Van Bockstaele E.J."/>
            <person name="Stagljar I."/>
            <person name="Berrettini W."/>
            <person name="Levenson R."/>
        </authorList>
    </citation>
    <scope>INTERACTION WITH WLS</scope>
</reference>
<reference key="38">
    <citation type="journal article" date="2010" name="Mol. Pain">
        <title>A novel alternatively spliced isoform of the mu-opioid receptor: functional antagonism.</title>
        <authorList>
            <person name="Gris P."/>
            <person name="Gauthier J."/>
            <person name="Cheng P."/>
            <person name="Gibson D.G."/>
            <person name="Gris D."/>
            <person name="Laur O."/>
            <person name="Pierson J."/>
            <person name="Wentworth S."/>
            <person name="Nackley A.G."/>
            <person name="Maixner W."/>
            <person name="Diatchenko L."/>
        </authorList>
    </citation>
    <scope>FUNCTION (ISOFORM 12)</scope>
    <scope>SUBCELLULAR LOCATION (ISOFORM 12)</scope>
</reference>
<reference key="39">
    <citation type="journal article" date="1997" name="Mol. Psychiatry">
        <title>Mu opioid receptor gene variants: lack of association with alcohol dependence.</title>
        <authorList>
            <person name="Bergen A.W."/>
            <person name="Kokoszka J."/>
            <person name="Peterson R."/>
            <person name="Long J.C."/>
            <person name="Virkkunen M."/>
            <person name="Linnoila M."/>
            <person name="Goldman D."/>
        </authorList>
    </citation>
    <scope>VARIANTS VAL-6; ASP-40 AND CYS-147</scope>
</reference>
<reference key="40">
    <citation type="journal article" date="1998" name="Proc. Natl. Acad. Sci. U.S.A.">
        <title>Single-nucleotide polymorphism in the human mu opioid receptor gene alters beta-endorphin binding and activity: possible implications for opiate addiction.</title>
        <authorList>
            <person name="Bond C."/>
            <person name="LaForge K.S."/>
            <person name="Tian M."/>
            <person name="Melia D."/>
            <person name="Zhang S."/>
            <person name="Borg L."/>
            <person name="Gong J."/>
            <person name="Schluger J."/>
            <person name="Strong J.A."/>
            <person name="Leal S.M."/>
            <person name="Tischfield J.A."/>
            <person name="Kreek M.J."/>
            <person name="Yu L."/>
        </authorList>
    </citation>
    <scope>VARIANTS VAL-6; ASP-40 AND HIS-260</scope>
    <scope>CHARACTERIZATION OF VARIANT ASP-40</scope>
    <scope>POLYMORPHISM</scope>
    <scope>FUNCTION</scope>
    <scope>SUBCELLULAR LOCATION</scope>
</reference>
<protein>
    <recommendedName>
        <fullName>Mu-type opioid receptor</fullName>
        <shortName>M-OR-1</shortName>
        <shortName>MOR-1</shortName>
    </recommendedName>
    <alternativeName>
        <fullName>Mu opiate receptor</fullName>
    </alternativeName>
    <alternativeName>
        <fullName>Mu opioid receptor</fullName>
        <shortName>MOP</shortName>
        <shortName>hMOP</shortName>
    </alternativeName>
</protein>
<comment type="function">
    <text evidence="1 7 9 12 24 25 26 28 31 37">Receptor for endogenous opioids such as beta-endorphin and endomorphin (PubMed:10529478, PubMed:12589820, PubMed:7891175, PubMed:7905839, PubMed:7957926, PubMed:9689128). Receptor for natural and synthetic opioids including morphine, heroin, DAMGO, fentanyl, etorphine, buprenorphin and methadone (PubMed:10529478, PubMed:10836142, PubMed:12589820, PubMed:19300905, PubMed:7891175, PubMed:7905839, PubMed:7957926, PubMed:9689128). Also activated by enkephalin peptides, such as Met-enkephalin or Met-enkephalin-Arg-Phe, with higher affinity for Met-enkephalin-Arg-Phe (By similarity). Agonist binding to the receptor induces coupling to an inactive GDP-bound heterotrimeric G-protein complex and subsequent exchange of GDP for GTP in the G-protein alpha subunit leading to dissociation of the G-protein complex with the free GTP-bound G-protein alpha and the G-protein beta-gamma dimer activating downstream cellular effectors (PubMed:7905839). The agonist- and cell type-specific activity is predominantly coupled to pertussis toxin-sensitive G(i) and G(o) G alpha proteins, GNAI1, GNAI2, GNAI3 and GNAO1 isoforms Alpha-1 and Alpha-2, and to a lesser extent to pertussis toxin-insensitive G alpha proteins GNAZ and GNA15 (PubMed:12068084). They mediate an array of downstream cellular responses, including inhibition of adenylate cyclase activity and both N-type and L-type calcium channels, activation of inward rectifying potassium channels, mitogen-activated protein kinase (MAPK), phospholipase C (PLC), phosphoinositide/protein kinase (PKC), phosphoinositide 3-kinase (PI3K) and regulation of NF-kappa-B (By similarity). Also couples to adenylate cyclase stimulatory G alpha proteins (By similarity). The selective temporal coupling to G-proteins and subsequent signaling can be regulated by RGSZ proteins, such as RGS9, RGS17 and RGS4 (By similarity). Phosphorylation by members of the GPRK subfamily of Ser/Thr protein kinases and association with beta-arrestins is involved in short-term receptor desensitization (By similarity). Beta-arrestins associate with the GPRK-phosphorylated receptor and uncouple it from the G-protein thus terminating signal transduction (By similarity). The phosphorylated receptor is internalized through endocytosis via clathrin-coated pits which involves beta-arrestins (By similarity). The activation of the ERK pathway occurs either in a G-protein-dependent or a beta-arrestin-dependent manner and is regulated by agonist-specific receptor phosphorylation (By similarity). Acts as a class A G-protein coupled receptor (GPCR) which dissociates from beta-arrestin at or near the plasma membrane and undergoes rapid recycling (By similarity). Receptor down-regulation pathways are varying with the agonist and occur dependent or independent of G-protein coupling (By similarity). Endogenous ligands induce rapid desensitization, endocytosis and recycling (By similarity). Heterooligomerization with other GPCRs can modulate agonist binding, signaling and trafficking properties (By similarity).</text>
</comment>
<comment type="function">
    <molecule>Isoform 12</molecule>
    <text evidence="23">Couples to GNAS and is proposed to be involved in excitatory effects.</text>
</comment>
<comment type="function">
    <molecule>Isoform 16</molecule>
    <text evidence="19">Does not bind agonists but may act through oligomerization with binding-competent OPRM1 isoforms and reduce their ligand binding activity.</text>
</comment>
<comment type="function">
    <molecule>Isoform 17</molecule>
    <text evidence="19">Does not bind agonists but may act through oligomerization with binding-competent OPRM1 isoforms and reduce their ligand binding activity.</text>
</comment>
<comment type="subunit">
    <text evidence="1 2 6 8 10 11 13 14 15 17 18 20 21 22">Forms homooligomers and heterooligomers with other GPCRs, such as OPRD1, OPRK1, OPRL1, NPFFR2, ADRA2A, SSTR2, CNR1 and CCR5 (probably in dimeric forms) (PubMed:12413885, PubMed:15778451, PubMed:15967873, PubMed:17224450). Interacts with heterotrimeric G proteins; interaction with a heterotrimeric complex containing GNAI1, GNB1 and GNG2 stabilizes the active conformation of the receptor and increases its affinity for endomorphin-2, the synthetic opioid peptide DAMGO and for morphinan agonists (By similarity). Interacts with PPL; the interaction disrupts agonist-mediated G-protein activation (PubMed:12810704). Interacts (via C-terminus) with DNAJB4 (via C-terminus) (PubMed:16542645). Interacts with calmodulin; the interaction inhibits the constitutive activity of OPRM1; it abolishes basal and attenuates agonist-stimulated G-protein coupling (PubMed:10419536, PubMed:10899953). Interacts with FLNA, PLD2, RANBP9 and WLS and GPM6A (PubMed:12519790, PubMed:14573758, PubMed:19788913, PubMed:20214800). Interacts with RTP4 (By similarity). Interacts with SYP and GNAS (By similarity). Interacts with RGS9, RGS17, RGS20, RGS4, PPP1R9B and HINT1 (By similarity).</text>
</comment>
<comment type="interaction">
    <interactant intactId="EBI-2624570">
        <id>P35372</id>
    </interactant>
    <interactant intactId="EBI-1058701">
        <id>Q9Y679</id>
        <label>AUP1</label>
    </interactant>
    <organismsDiffer>false</organismsDiffer>
    <experiments>4</experiments>
</comment>
<comment type="interaction">
    <interactant intactId="EBI-2624570">
        <id>P35372</id>
    </interactant>
    <interactant intactId="EBI-594661">
        <id>Q92905</id>
        <label>COPS5</label>
    </interactant>
    <organismsDiffer>false</organismsDiffer>
    <experiments>5</experiments>
</comment>
<comment type="interaction">
    <interactant intactId="EBI-2624570">
        <id>P35372</id>
    </interactant>
    <interactant intactId="EBI-6918542">
        <id>Q8TEW6</id>
        <label>DOK4</label>
    </interactant>
    <organismsDiffer>false</organismsDiffer>
    <experiments>4</experiments>
</comment>
<comment type="interaction">
    <interactant intactId="EBI-2624570">
        <id>P35372</id>
    </interactant>
    <interactant intactId="EBI-350432">
        <id>P21333</id>
        <label>FLNA</label>
    </interactant>
    <organismsDiffer>false</organismsDiffer>
    <experiments>5</experiments>
</comment>
<comment type="interaction">
    <interactant intactId="EBI-2624570">
        <id>P35372</id>
    </interactant>
    <interactant intactId="EBI-6918707">
        <id>P35212</id>
        <label>GJA4</label>
    </interactant>
    <organismsDiffer>false</organismsDiffer>
    <experiments>3</experiments>
</comment>
<comment type="interaction">
    <interactant intactId="EBI-2624570">
        <id>P35372</id>
    </interactant>
    <interactant intactId="EBI-5461341">
        <id>Q9H3P2</id>
        <label>NELFA</label>
    </interactant>
    <organismsDiffer>false</organismsDiffer>
    <experiments>2</experiments>
</comment>
<comment type="interaction">
    <interactant intactId="EBI-2624570">
        <id>P35372</id>
    </interactant>
    <interactant intactId="EBI-6656055">
        <id>PRO_0000008243</id>
        <label>PENK</label>
        <dbReference type="UniProtKB" id="P01210"/>
    </interactant>
    <organismsDiffer>false</organismsDiffer>
    <experiments>3</experiments>
</comment>
<comment type="interaction">
    <interactant intactId="EBI-2624570">
        <id>P35372</id>
    </interactant>
    <interactant intactId="EBI-636085">
        <id>Q96S59</id>
        <label>RANBP9</label>
    </interactant>
    <organismsDiffer>false</organismsDiffer>
    <experiments>5</experiments>
</comment>
<comment type="interaction">
    <interactant intactId="EBI-2624570">
        <id>P35372</id>
    </interactant>
    <interactant intactId="EBI-747107">
        <id>Q8IUQ4</id>
        <label>SIAH1</label>
    </interactant>
    <organismsDiffer>false</organismsDiffer>
    <experiments>4</experiments>
</comment>
<comment type="interaction">
    <interactant intactId="EBI-2624570">
        <id>P35372</id>
    </interactant>
    <interactant intactId="EBI-948141">
        <id>O43255</id>
        <label>SIAH2</label>
    </interactant>
    <organismsDiffer>false</organismsDiffer>
    <experiments>3</experiments>
</comment>
<comment type="interaction">
    <interactant intactId="EBI-2624570">
        <id>P35372</id>
    </interactant>
    <interactant intactId="EBI-1059156">
        <id>Q9P0L0</id>
        <label>VAPA</label>
    </interactant>
    <organismsDiffer>false</organismsDiffer>
    <experiments>4</experiments>
</comment>
<comment type="interaction">
    <interactant intactId="EBI-2624570">
        <id>P35372</id>
    </interactant>
    <interactant intactId="EBI-2868748">
        <id>Q5T9L3</id>
        <label>WLS</label>
    </interactant>
    <organismsDiffer>false</organismsDiffer>
    <experiments>11</experiments>
</comment>
<comment type="interaction">
    <interactant intactId="EBI-2624570">
        <id>P35372</id>
    </interactant>
    <interactant intactId="EBI-444225">
        <id>Q15942</id>
        <label>ZYX</label>
    </interactant>
    <organismsDiffer>false</organismsDiffer>
    <experiments>2</experiments>
</comment>
<comment type="interaction">
    <interactant intactId="EBI-12807478">
        <id>P35372-10</id>
    </interactant>
    <interactant intactId="EBI-10225815">
        <id>Q08AM2</id>
        <label>ADAM33</label>
    </interactant>
    <organismsDiffer>false</organismsDiffer>
    <experiments>3</experiments>
</comment>
<comment type="interaction">
    <interactant intactId="EBI-12807478">
        <id>P35372-10</id>
    </interactant>
    <interactant intactId="EBI-3904621">
        <id>P20292</id>
        <label>ALOX5AP</label>
    </interactant>
    <organismsDiffer>false</organismsDiffer>
    <experiments>3</experiments>
</comment>
<comment type="interaction">
    <interactant intactId="EBI-12807478">
        <id>P35372-10</id>
    </interactant>
    <interactant intactId="EBI-721179">
        <id>P27449</id>
        <label>ATP6V0C</label>
    </interactant>
    <organismsDiffer>false</organismsDiffer>
    <experiments>3</experiments>
</comment>
<comment type="interaction">
    <interactant intactId="EBI-12807478">
        <id>P35372-10</id>
    </interactant>
    <interactant intactId="EBI-12935759">
        <id>O15342</id>
        <label>ATP6V0E1</label>
    </interactant>
    <organismsDiffer>false</organismsDiffer>
    <experiments>3</experiments>
</comment>
<comment type="interaction">
    <interactant intactId="EBI-12807478">
        <id>P35372-10</id>
    </interactant>
    <interactant intactId="EBI-12822627">
        <id>O14523</id>
        <label>C2CD2L</label>
    </interactant>
    <organismsDiffer>false</organismsDiffer>
    <experiments>3</experiments>
</comment>
<comment type="interaction">
    <interactant intactId="EBI-12807478">
        <id>P35372-10</id>
    </interactant>
    <interactant intactId="EBI-9083477">
        <id>Q9P0B6</id>
        <label>CCDC167</label>
    </interactant>
    <organismsDiffer>false</organismsDiffer>
    <experiments>3</experiments>
</comment>
<comment type="interaction">
    <interactant intactId="EBI-12807478">
        <id>P35372-10</id>
    </interactant>
    <interactant intactId="EBI-14259393">
        <id>Q8IX05</id>
        <label>CD302</label>
    </interactant>
    <organismsDiffer>false</organismsDiffer>
    <experiments>3</experiments>
</comment>
<comment type="interaction">
    <interactant intactId="EBI-12807478">
        <id>P35372-10</id>
    </interactant>
    <interactant intactId="EBI-4402346">
        <id>P51798</id>
        <label>CLCN7</label>
    </interactant>
    <organismsDiffer>false</organismsDiffer>
    <experiments>3</experiments>
</comment>
<comment type="interaction">
    <interactant intactId="EBI-12807478">
        <id>P35372-10</id>
    </interactant>
    <interactant intactId="EBI-13372810">
        <id>P78369</id>
        <label>CLDN10</label>
    </interactant>
    <organismsDiffer>false</organismsDiffer>
    <experiments>3</experiments>
</comment>
<comment type="interaction">
    <interactant intactId="EBI-12807478">
        <id>P35372-10</id>
    </interactant>
    <interactant intactId="EBI-17766761">
        <id>Q8N7P3</id>
        <label>CLDN22</label>
    </interactant>
    <organismsDiffer>false</organismsDiffer>
    <experiments>3</experiments>
</comment>
<comment type="interaction">
    <interactant intactId="EBI-12807478">
        <id>P35372-10</id>
    </interactant>
    <interactant intactId="EBI-10215641">
        <id>P56748</id>
        <label>CLDN8</label>
    </interactant>
    <organismsDiffer>false</organismsDiffer>
    <experiments>3</experiments>
</comment>
<comment type="interaction">
    <interactant intactId="EBI-12807478">
        <id>P35372-10</id>
    </interactant>
    <interactant intactId="EBI-12811991">
        <id>Q2HXU8-2</id>
        <label>CLEC12B</label>
    </interactant>
    <organismsDiffer>false</organismsDiffer>
    <experiments>3</experiments>
</comment>
<comment type="interaction">
    <interactant intactId="EBI-12807478">
        <id>P35372-10</id>
    </interactant>
    <interactant intactId="EBI-11989440">
        <id>Q9BXN2-6</id>
        <label>CLEC7A</label>
    </interactant>
    <organismsDiffer>false</organismsDiffer>
    <experiments>3</experiments>
</comment>
<comment type="interaction">
    <interactant intactId="EBI-12807478">
        <id>P35372-10</id>
    </interactant>
    <interactant intactId="EBI-12172273">
        <id>O95406</id>
        <label>CNIH1</label>
    </interactant>
    <organismsDiffer>false</organismsDiffer>
    <experiments>3</experiments>
</comment>
<comment type="interaction">
    <interactant intactId="EBI-12807478">
        <id>P35372-10</id>
    </interactant>
    <interactant intactId="EBI-12019274">
        <id>Q4LDR2</id>
        <label>CTXN3</label>
    </interactant>
    <organismsDiffer>false</organismsDiffer>
    <experiments>3</experiments>
</comment>
<comment type="interaction">
    <interactant intactId="EBI-12807478">
        <id>P35372-10</id>
    </interactant>
    <interactant intactId="EBI-8646596">
        <id>P49447</id>
        <label>CYB561</label>
    </interactant>
    <organismsDiffer>false</organismsDiffer>
    <experiments>3</experiments>
</comment>
<comment type="interaction">
    <interactant intactId="EBI-12807478">
        <id>P35372-10</id>
    </interactant>
    <interactant intactId="EBI-2339219">
        <id>Q08426</id>
        <label>EHHADH</label>
    </interactant>
    <organismsDiffer>false</organismsDiffer>
    <experiments>3</experiments>
</comment>
<comment type="interaction">
    <interactant intactId="EBI-12807478">
        <id>P35372-10</id>
    </interactant>
    <interactant intactId="EBI-4319440">
        <id>P54849</id>
        <label>EMP1</label>
    </interactant>
    <organismsDiffer>false</organismsDiffer>
    <experiments>3</experiments>
</comment>
<comment type="interaction">
    <interactant intactId="EBI-12807478">
        <id>P35372-10</id>
    </interactant>
    <interactant intactId="EBI-3907816">
        <id>P54852</id>
        <label>EMP3</label>
    </interactant>
    <organismsDiffer>false</organismsDiffer>
    <experiments>3</experiments>
</comment>
<comment type="interaction">
    <interactant intactId="EBI-12807478">
        <id>P35372-10</id>
    </interactant>
    <interactant intactId="EBI-7932862">
        <id>Q01628</id>
        <label>IFITM3</label>
    </interactant>
    <organismsDiffer>false</organismsDiffer>
    <experiments>3</experiments>
</comment>
<comment type="interaction">
    <interactant intactId="EBI-12807478">
        <id>P35372-10</id>
    </interactant>
    <interactant intactId="EBI-8070286">
        <id>O43561-2</id>
        <label>LAT</label>
    </interactant>
    <organismsDiffer>false</organismsDiffer>
    <experiments>3</experiments>
</comment>
<comment type="interaction">
    <interactant intactId="EBI-12807478">
        <id>P35372-10</id>
    </interactant>
    <interactant intactId="EBI-12033434">
        <id>Q9UBY5</id>
        <label>LPAR3</label>
    </interactant>
    <organismsDiffer>false</organismsDiffer>
    <experiments>3</experiments>
</comment>
<comment type="interaction">
    <interactant intactId="EBI-12807478">
        <id>P35372-10</id>
    </interactant>
    <interactant intactId="EBI-11304917">
        <id>Q8N386</id>
        <label>LRRC25</label>
    </interactant>
    <organismsDiffer>false</organismsDiffer>
    <experiments>3</experiments>
</comment>
<comment type="interaction">
    <interactant intactId="EBI-12807478">
        <id>P35372-10</id>
    </interactant>
    <interactant intactId="EBI-3932027">
        <id>P21145</id>
        <label>MAL</label>
    </interactant>
    <organismsDiffer>false</organismsDiffer>
    <experiments>3</experiments>
</comment>
<comment type="interaction">
    <interactant intactId="EBI-12807478">
        <id>P35372-10</id>
    </interactant>
    <interactant intactId="EBI-750078">
        <id>Q13021</id>
        <label>MALL</label>
    </interactant>
    <organismsDiffer>false</organismsDiffer>
    <experiments>3</experiments>
</comment>
<comment type="interaction">
    <interactant intactId="EBI-12807478">
        <id>P35372-10</id>
    </interactant>
    <interactant intactId="EBI-720768">
        <id>Q9H492</id>
        <label>MAP1LC3A</label>
    </interactant>
    <organismsDiffer>false</organismsDiffer>
    <experiments>3</experiments>
</comment>
<comment type="interaction">
    <interactant intactId="EBI-12807478">
        <id>P35372-10</id>
    </interactant>
    <interactant intactId="EBI-2603996">
        <id>Q9BXW4</id>
        <label>MAP1LC3C</label>
    </interactant>
    <organismsDiffer>false</organismsDiffer>
    <experiments>3</experiments>
</comment>
<comment type="interaction">
    <interactant intactId="EBI-12807478">
        <id>P35372-10</id>
    </interactant>
    <interactant intactId="EBI-11956541">
        <id>Q9GZY8-5</id>
        <label>MFF</label>
    </interactant>
    <organismsDiffer>false</organismsDiffer>
    <experiments>3</experiments>
</comment>
<comment type="interaction">
    <interactant intactId="EBI-12807478">
        <id>P35372-10</id>
    </interactant>
    <interactant intactId="EBI-6380741">
        <id>P42857</id>
        <label>NSG1</label>
    </interactant>
    <organismsDiffer>false</organismsDiffer>
    <experiments>3</experiments>
</comment>
<comment type="interaction">
    <interactant intactId="EBI-12807478">
        <id>P35372-10</id>
    </interactant>
    <interactant intactId="EBI-2689908">
        <id>Q8IV08</id>
        <label>PLD3</label>
    </interactant>
    <organismsDiffer>false</organismsDiffer>
    <experiments>3</experiments>
</comment>
<comment type="interaction">
    <interactant intactId="EBI-12807478">
        <id>P35372-10</id>
    </interactant>
    <interactant intactId="EBI-2845982">
        <id>Q01453</id>
        <label>PMP22</label>
    </interactant>
    <organismsDiffer>false</organismsDiffer>
    <experiments>3</experiments>
</comment>
<comment type="interaction">
    <interactant intactId="EBI-12807478">
        <id>P35372-10</id>
    </interactant>
    <interactant intactId="EBI-1052363">
        <id>Q9NS64</id>
        <label>RPRM</label>
    </interactant>
    <organismsDiffer>false</organismsDiffer>
    <experiments>3</experiments>
</comment>
<comment type="interaction">
    <interactant intactId="EBI-12807478">
        <id>P35372-10</id>
    </interactant>
    <interactant intactId="EBI-12825395">
        <id>O95968</id>
        <label>SCGB1D1</label>
    </interactant>
    <organismsDiffer>false</organismsDiffer>
    <experiments>3</experiments>
</comment>
<comment type="interaction">
    <interactant intactId="EBI-12807478">
        <id>P35372-10</id>
    </interactant>
    <interactant intactId="EBI-8652744">
        <id>Q96IW7</id>
        <label>SEC22A</label>
    </interactant>
    <organismsDiffer>false</organismsDiffer>
    <experiments>3</experiments>
</comment>
<comment type="interaction">
    <interactant intactId="EBI-12807478">
        <id>P35372-10</id>
    </interactant>
    <interactant intactId="EBI-749270">
        <id>Q8N6R1</id>
        <label>SERP2</label>
    </interactant>
    <organismsDiffer>false</organismsDiffer>
    <experiments>3</experiments>
</comment>
<comment type="interaction">
    <interactant intactId="EBI-12807478">
        <id>P35372-10</id>
    </interactant>
    <interactant intactId="EBI-8644112">
        <id>Q9BRI3</id>
        <label>SLC30A2</label>
    </interactant>
    <organismsDiffer>false</organismsDiffer>
    <experiments>3</experiments>
</comment>
<comment type="interaction">
    <interactant intactId="EBI-12807478">
        <id>P35372-10</id>
    </interactant>
    <interactant intactId="EBI-10314552">
        <id>Q9NVC3</id>
        <label>SLC38A7</label>
    </interactant>
    <organismsDiffer>false</organismsDiffer>
    <experiments>3</experiments>
</comment>
<comment type="interaction">
    <interactant intactId="EBI-12807478">
        <id>P35372-10</id>
    </interactant>
    <interactant intactId="EBI-12266234">
        <id>Q8IVJ1</id>
        <label>SLC41A1</label>
    </interactant>
    <organismsDiffer>false</organismsDiffer>
    <experiments>3</experiments>
</comment>
<comment type="interaction">
    <interactant intactId="EBI-12807478">
        <id>P35372-10</id>
    </interactant>
    <interactant intactId="EBI-10226799">
        <id>Q0VAQ4</id>
        <label>SMAGP</label>
    </interactant>
    <organismsDiffer>false</organismsDiffer>
    <experiments>3</experiments>
</comment>
<comment type="interaction">
    <interactant intactId="EBI-12807478">
        <id>P35372-10</id>
    </interactant>
    <interactant intactId="EBI-10329860">
        <id>Q9Y6I9</id>
        <label>TEX264</label>
    </interactant>
    <organismsDiffer>false</organismsDiffer>
    <experiments>3</experiments>
</comment>
<comment type="interaction">
    <interactant intactId="EBI-12807478">
        <id>P35372-10</id>
    </interactant>
    <interactant intactId="EBI-8650934">
        <id>P48230</id>
        <label>TM4SF4</label>
    </interactant>
    <organismsDiffer>false</organismsDiffer>
    <experiments>3</experiments>
</comment>
<comment type="interaction">
    <interactant intactId="EBI-12807478">
        <id>P35372-10</id>
    </interactant>
    <interactant intactId="EBI-1045825">
        <id>P55061</id>
        <label>TMBIM6</label>
    </interactant>
    <organismsDiffer>false</organismsDiffer>
    <experiments>3</experiments>
</comment>
<comment type="interaction">
    <interactant intactId="EBI-12807478">
        <id>P35372-10</id>
    </interactant>
    <interactant intactId="EBI-13378608">
        <id>Q5W0B7</id>
        <label>TMEM236</label>
    </interactant>
    <organismsDiffer>false</organismsDiffer>
    <experiments>3</experiments>
</comment>
<comment type="interaction">
    <interactant intactId="EBI-12807478">
        <id>P35372-10</id>
    </interactant>
    <interactant intactId="EBI-11988865">
        <id>A5PKU2</id>
        <label>TUSC5</label>
    </interactant>
    <organismsDiffer>false</organismsDiffer>
    <experiments>3</experiments>
</comment>
<comment type="subcellular location">
    <subcellularLocation>
        <location evidence="7 12 19 24 25 26 28">Cell membrane</location>
        <topology evidence="19">Multi-pass membrane protein</topology>
    </subcellularLocation>
    <subcellularLocation>
        <location evidence="3">Cell projection</location>
        <location evidence="3">Axon</location>
    </subcellularLocation>
    <subcellularLocation>
        <location evidence="3">Perikaryon</location>
    </subcellularLocation>
    <subcellularLocation>
        <location evidence="3">Cell projection</location>
        <location evidence="3">Dendrite</location>
    </subcellularLocation>
    <subcellularLocation>
        <location evidence="3">Endosome</location>
    </subcellularLocation>
    <text evidence="3">Is rapidly internalized after agonist binding.</text>
</comment>
<comment type="subcellular location">
    <molecule>Isoform 12</molecule>
    <subcellularLocation>
        <location evidence="23">Cytoplasm</location>
    </subcellularLocation>
</comment>
<comment type="alternative products">
    <event type="alternative splicing"/>
    <isoform>
        <id>P35372-1</id>
        <name>1</name>
        <sequence type="displayed"/>
    </isoform>
    <isoform>
        <id>P35372-2</id>
        <name>2</name>
        <name>MOR1A</name>
        <name>MOR-1A</name>
        <sequence type="described" ref="VSP_001896"/>
    </isoform>
    <isoform>
        <id>P35372-3</id>
        <name>3</name>
        <name>MOR-1R</name>
        <name>MOR-1X</name>
        <sequence type="described" ref="VSP_037695"/>
    </isoform>
    <isoform>
        <id>P35372-4</id>
        <name>4</name>
        <name>MOR-1B3</name>
        <sequence type="described" ref="VSP_037696"/>
    </isoform>
    <isoform>
        <id>P35372-5</id>
        <name>5</name>
        <name>MOR-1C</name>
        <name>MOR-1O</name>
        <sequence type="described" ref="VSP_037697"/>
    </isoform>
    <isoform>
        <id>P35372-6</id>
        <name>6</name>
        <name>MOR-1V</name>
        <name>MOR-1Y</name>
        <name>MOR-1Y2</name>
        <name>MOR-1Y3</name>
        <sequence type="described" ref="VSP_037698"/>
    </isoform>
    <isoform>
        <id>P35372-7</id>
        <name>7</name>
        <name>MOR-1B1</name>
        <sequence type="described" ref="VSP_037699"/>
    </isoform>
    <isoform>
        <id>P35372-8</id>
        <name>8</name>
        <name>MOR-1B2</name>
        <sequence type="described" ref="VSP_037700"/>
    </isoform>
    <isoform>
        <id>P35372-9</id>
        <name>9</name>
        <name>MOR-1B5</name>
        <sequence type="described" ref="VSP_037701"/>
    </isoform>
    <isoform>
        <id>P35372-10</id>
        <name>10</name>
        <name>MOR-1i</name>
        <sequence type="described" ref="VSP_037693"/>
    </isoform>
    <isoform>
        <id>P35372-11</id>
        <name>11</name>
        <name>MOR-1B4</name>
        <sequence type="described" ref="VSP_037694"/>
    </isoform>
    <isoform>
        <id>P35372-12</id>
        <name>12</name>
        <name>MOR-1G1</name>
        <name>MOR-1K</name>
        <sequence type="described" ref="VSP_042327"/>
    </isoform>
    <isoform>
        <id>P35372-13</id>
        <name>13</name>
        <name>MOR-1G2</name>
        <sequence type="described" ref="VSP_042328"/>
    </isoform>
    <isoform>
        <id>P35372-14</id>
        <name>14</name>
        <name>Mu3</name>
        <sequence type="described" ref="VSP_042327 VSP_042331"/>
    </isoform>
    <isoform>
        <id>P35372-15</id>
        <name>15</name>
        <name>MOR-1W</name>
        <sequence type="described" ref="VSP_042327 VSP_001896"/>
    </isoform>
    <isoform>
        <id>P35372-16</id>
        <name>16</name>
        <name>SV1</name>
        <sequence type="described" ref="VSP_042330"/>
    </isoform>
    <isoform>
        <id>P35372-17</id>
        <name>17</name>
        <name>SV2</name>
        <sequence type="described" ref="VSP_042329"/>
    </isoform>
    <isoform>
        <id>P35372-18</id>
        <name>18</name>
        <name>hMOR-1Z</name>
        <sequence type="described" ref="VSP_047577 VSP_047578"/>
    </isoform>
    <text>Additional isoforms seem to exist.</text>
</comment>
<comment type="tissue specificity">
    <text evidence="19">Expressed in brain. Isoform 16 and isoform 17 are detected in brain.</text>
</comment>
<comment type="PTM">
    <text evidence="1">Phosphorylated. Differentially phosphorylated in basal and agonist-induced conditions. Agonist-mediated phosphorylation modulates receptor internalization. Phosphorylated by GRK2 in a agonist-dependent manner. Phosphorylation at Tyr-168 requires receptor activation, is dependent on non-receptor protein tyrosine kinase Src and results in a decrease in agonist efficacy by reducing G-protein coupling efficiency. Phosphorylated on tyrosine residues; the phosphorylation is involved in agonist-induced G-protein-independent receptor down-regulation. Phosphorylation at Ser-377 is involved in G-protein-dependent but not beta-arrestin-dependent activation of the ERK pathway (By similarity).</text>
</comment>
<comment type="PTM">
    <text evidence="2">Ubiquitinated. A basal ubiquitination seems not to be related to degradation. Ubiquitination is increased upon formation of OPRM1:OPRD1 oligomers leading to proteasomal degradation; the ubiquitination is diminished by RTP4.</text>
</comment>
<comment type="polymorphism">
    <text evidence="28">Variant Asp-40 does not show altered binding affinities for most opioid peptides and alkaloids tested, but it binds beta-endorphin, an endogenous opioid that activates the mu opioid receptor, approximately 3 times more tightly than the most common allelic form.</text>
</comment>
<comment type="miscellaneous">
    <text>OPRM1 is the main physiological target for most clinically important opioid analgesics. OPRM1-mediated inhibition of voltage-gated calcium channels on central presynaptic terminals of primary afferent nociceptors is thought to be one of the primary mechanisms mediating analgesia at the spinal level. Opioid-induced hyperalgesic responses are observed following both acute and chronic dosing associated with cellular excitation.</text>
</comment>
<comment type="miscellaneous">
    <molecule>Isoform 6</molecule>
    <text evidence="42">May be produced at very low levels due to a premature stop codon in the mRNA, leading to nonsense-mediated mRNA decay.</text>
</comment>
<comment type="similarity">
    <text evidence="5">Belongs to the G-protein coupled receptor 1 family.</text>
</comment>
<comment type="sequence caution" evidence="42">
    <conflict type="erroneous initiation">
        <sequence resource="EMBL-CDS" id="EAW47705"/>
    </conflict>
</comment>
<comment type="online information" name="Wikipedia">
    <link uri="https://en.wikipedia.org/wiki/Mu_opioid_receptor"/>
    <text>Mu opioid receptor entry</text>
</comment>
<organism>
    <name type="scientific">Homo sapiens</name>
    <name type="common">Human</name>
    <dbReference type="NCBI Taxonomy" id="9606"/>
    <lineage>
        <taxon>Eukaryota</taxon>
        <taxon>Metazoa</taxon>
        <taxon>Chordata</taxon>
        <taxon>Craniata</taxon>
        <taxon>Vertebrata</taxon>
        <taxon>Euteleostomi</taxon>
        <taxon>Mammalia</taxon>
        <taxon>Eutheria</taxon>
        <taxon>Euarchontoglires</taxon>
        <taxon>Primates</taxon>
        <taxon>Haplorrhini</taxon>
        <taxon>Catarrhini</taxon>
        <taxon>Hominidae</taxon>
        <taxon>Homo</taxon>
    </lineage>
</organism>
<dbReference type="EMBL" id="L25119">
    <property type="protein sequence ID" value="AAA20580.1"/>
    <property type="molecule type" value="mRNA"/>
</dbReference>
<dbReference type="EMBL" id="U12569">
    <property type="protein sequence ID" value="AAB60354.1"/>
    <property type="molecule type" value="mRNA"/>
</dbReference>
<dbReference type="EMBL" id="L29301">
    <property type="protein sequence ID" value="AAA73958.1"/>
    <property type="molecule type" value="mRNA"/>
</dbReference>
<dbReference type="EMBL" id="AY036622">
    <property type="protein sequence ID" value="AAK74189.1"/>
    <property type="molecule type" value="mRNA"/>
</dbReference>
<dbReference type="EMBL" id="AY036623">
    <property type="protein sequence ID" value="AAK74190.1"/>
    <property type="molecule type" value="mRNA"/>
</dbReference>
<dbReference type="EMBL" id="AY195733">
    <property type="protein sequence ID" value="AAO21305.1"/>
    <property type="molecule type" value="mRNA"/>
</dbReference>
<dbReference type="EMBL" id="AY225404">
    <property type="protein sequence ID" value="AAP44727.1"/>
    <property type="molecule type" value="mRNA"/>
</dbReference>
<dbReference type="EMBL" id="AY309001">
    <property type="protein sequence ID" value="AAQ77385.1"/>
    <property type="molecule type" value="mRNA"/>
</dbReference>
<dbReference type="EMBL" id="AY309005">
    <property type="protein sequence ID" value="AAQ77389.1"/>
    <property type="molecule type" value="mRNA"/>
</dbReference>
<dbReference type="EMBL" id="AY309006">
    <property type="protein sequence ID" value="AAQ77390.1"/>
    <property type="molecule type" value="mRNA"/>
</dbReference>
<dbReference type="EMBL" id="AY309007">
    <property type="protein sequence ID" value="AAQ77391.1"/>
    <property type="molecule type" value="mRNA"/>
</dbReference>
<dbReference type="EMBL" id="AY309008">
    <property type="protein sequence ID" value="AAQ77392.1"/>
    <property type="molecule type" value="mRNA"/>
</dbReference>
<dbReference type="EMBL" id="AY309009">
    <property type="protein sequence ID" value="AAQ77393.1"/>
    <property type="molecule type" value="mRNA"/>
</dbReference>
<dbReference type="EMBL" id="EU340241">
    <property type="protein sequence ID" value="ACA49726.1"/>
    <property type="molecule type" value="mRNA"/>
</dbReference>
<dbReference type="EMBL" id="EU340242">
    <property type="protein sequence ID" value="ACA49727.1"/>
    <property type="molecule type" value="mRNA"/>
</dbReference>
<dbReference type="EMBL" id="EU340243">
    <property type="protein sequence ID" value="ACA49728.1"/>
    <property type="molecule type" value="mRNA"/>
</dbReference>
<dbReference type="EMBL" id="AY364230">
    <property type="protein sequence ID" value="AAR12887.1"/>
    <property type="molecule type" value="mRNA"/>
</dbReference>
<dbReference type="EMBL" id="AY364890">
    <property type="protein sequence ID" value="AAR11568.1"/>
    <property type="molecule type" value="mRNA"/>
</dbReference>
<dbReference type="EMBL" id="HQ699462">
    <property type="protein sequence ID" value="AET97615.1"/>
    <property type="molecule type" value="mRNA"/>
</dbReference>
<dbReference type="EMBL" id="EU360599">
    <property type="protein sequence ID" value="ABY61366.1"/>
    <property type="molecule type" value="mRNA"/>
</dbReference>
<dbReference type="EMBL" id="EU362990">
    <property type="protein sequence ID" value="ABY66530.1"/>
    <property type="molecule type" value="mRNA"/>
</dbReference>
<dbReference type="EMBL" id="AK313901">
    <property type="protein sequence ID" value="BAG36624.1"/>
    <property type="molecule type" value="mRNA"/>
</dbReference>
<dbReference type="EMBL" id="AY521028">
    <property type="protein sequence ID" value="AAS00462.1"/>
    <property type="molecule type" value="mRNA"/>
</dbReference>
<dbReference type="EMBL" id="AY587764">
    <property type="protein sequence ID" value="AAS83107.1"/>
    <property type="molecule type" value="Genomic_DNA"/>
</dbReference>
<dbReference type="EMBL" id="FJ041292">
    <property type="protein sequence ID" value="ACM90350.1"/>
    <property type="molecule type" value="mRNA"/>
</dbReference>
<dbReference type="EMBL" id="FJ041293">
    <property type="protein sequence ID" value="ACM90351.1"/>
    <property type="molecule type" value="mRNA"/>
</dbReference>
<dbReference type="EMBL" id="FJ041294">
    <property type="protein sequence ID" value="ACM90352.1"/>
    <property type="molecule type" value="mRNA"/>
</dbReference>
<dbReference type="EMBL" id="AL132774">
    <property type="status" value="NOT_ANNOTATED_CDS"/>
    <property type="molecule type" value="Genomic_DNA"/>
</dbReference>
<dbReference type="EMBL" id="AL136444">
    <property type="status" value="NOT_ANNOTATED_CDS"/>
    <property type="molecule type" value="Genomic_DNA"/>
</dbReference>
<dbReference type="EMBL" id="AL445220">
    <property type="status" value="NOT_ANNOTATED_CDS"/>
    <property type="molecule type" value="Genomic_DNA"/>
</dbReference>
<dbReference type="EMBL" id="CH471051">
    <property type="protein sequence ID" value="EAW47705.1"/>
    <property type="status" value="ALT_INIT"/>
    <property type="molecule type" value="Genomic_DNA"/>
</dbReference>
<dbReference type="EMBL" id="BC074927">
    <property type="protein sequence ID" value="AAH74927.1"/>
    <property type="molecule type" value="mRNA"/>
</dbReference>
<dbReference type="EMBL" id="AY292290">
    <property type="protein sequence ID" value="AAP44409.1"/>
    <property type="molecule type" value="Genomic_DNA"/>
</dbReference>
<dbReference type="EMBL" id="AY292291">
    <property type="protein sequence ID" value="AAP44410.1"/>
    <property type="molecule type" value="Genomic_DNA"/>
</dbReference>
<dbReference type="EMBL" id="AF153500">
    <property type="protein sequence ID" value="AAD44318.1"/>
    <property type="molecule type" value="Genomic_DNA"/>
</dbReference>
<dbReference type="CCDS" id="CCDS43517.1">
    <molecule id="P35372-5"/>
</dbReference>
<dbReference type="CCDS" id="CCDS43518.1">
    <molecule id="P35372-3"/>
</dbReference>
<dbReference type="CCDS" id="CCDS47503.1">
    <molecule id="P35372-10"/>
</dbReference>
<dbReference type="CCDS" id="CCDS47504.1">
    <molecule id="P35372-7"/>
</dbReference>
<dbReference type="CCDS" id="CCDS47505.1">
    <molecule id="P35372-8"/>
</dbReference>
<dbReference type="CCDS" id="CCDS47506.1">
    <molecule id="P35372-4"/>
</dbReference>
<dbReference type="CCDS" id="CCDS47507.1">
    <molecule id="P35372-9"/>
</dbReference>
<dbReference type="CCDS" id="CCDS47508.1">
    <molecule id="P35372-2"/>
</dbReference>
<dbReference type="CCDS" id="CCDS55068.1">
    <molecule id="P35372-13"/>
</dbReference>
<dbReference type="CCDS" id="CCDS55069.1">
    <molecule id="P35372-11"/>
</dbReference>
<dbReference type="CCDS" id="CCDS55070.1">
    <molecule id="P35372-1"/>
</dbReference>
<dbReference type="CCDS" id="CCDS55071.1">
    <molecule id="P35372-12"/>
</dbReference>
<dbReference type="PIR" id="I56553">
    <property type="entry name" value="I56553"/>
</dbReference>
<dbReference type="PIR" id="S65693">
    <property type="entry name" value="S65693"/>
</dbReference>
<dbReference type="RefSeq" id="NP_000905.3">
    <molecule id="P35372-1"/>
    <property type="nucleotide sequence ID" value="NM_000914.5"/>
</dbReference>
<dbReference type="RefSeq" id="NP_001008503.2">
    <molecule id="P35372-5"/>
    <property type="nucleotide sequence ID" value="NM_001008503.3"/>
</dbReference>
<dbReference type="RefSeq" id="NP_001008504.2">
    <molecule id="P35372-2"/>
    <property type="nucleotide sequence ID" value="NM_001008504.4"/>
</dbReference>
<dbReference type="RefSeq" id="NP_001008505.2">
    <molecule id="P35372-3"/>
    <property type="nucleotide sequence ID" value="NM_001008505.2"/>
</dbReference>
<dbReference type="RefSeq" id="NP_001138751.1">
    <molecule id="P35372-10"/>
    <property type="nucleotide sequence ID" value="NM_001145279.4"/>
</dbReference>
<dbReference type="RefSeq" id="NP_001138752.1">
    <molecule id="P35372-12"/>
    <property type="nucleotide sequence ID" value="NM_001145280.4"/>
</dbReference>
<dbReference type="RefSeq" id="NP_001138753.1">
    <molecule id="P35372-13"/>
    <property type="nucleotide sequence ID" value="NM_001145281.3"/>
</dbReference>
<dbReference type="RefSeq" id="NP_001138754.1">
    <molecule id="P35372-7"/>
    <property type="nucleotide sequence ID" value="NM_001145282.2"/>
</dbReference>
<dbReference type="RefSeq" id="NP_001138755.1">
    <molecule id="P35372-8"/>
    <property type="nucleotide sequence ID" value="NM_001145283.2"/>
</dbReference>
<dbReference type="RefSeq" id="NP_001138756.1">
    <molecule id="P35372-4"/>
    <property type="nucleotide sequence ID" value="NM_001145284.3"/>
</dbReference>
<dbReference type="RefSeq" id="NP_001138757.1">
    <molecule id="P35372-11"/>
    <property type="nucleotide sequence ID" value="NM_001145285.3"/>
</dbReference>
<dbReference type="RefSeq" id="NP_001138758.1">
    <molecule id="P35372-9"/>
    <property type="nucleotide sequence ID" value="NM_001145286.3"/>
</dbReference>
<dbReference type="RefSeq" id="NP_001138759.1">
    <molecule id="P35372-12"/>
    <property type="nucleotide sequence ID" value="NM_001145287.3"/>
</dbReference>
<dbReference type="RefSeq" id="NP_001272452.1">
    <property type="nucleotide sequence ID" value="NM_001285523.2"/>
</dbReference>
<dbReference type="RefSeq" id="NP_001272453.1">
    <molecule id="P35372-10"/>
    <property type="nucleotide sequence ID" value="NM_001285524.1"/>
</dbReference>
<dbReference type="RefSeq" id="NP_001272455.1">
    <molecule id="P35372-12"/>
    <property type="nucleotide sequence ID" value="NM_001285526.2"/>
</dbReference>
<dbReference type="RefSeq" id="NP_001272456.1">
    <molecule id="P35372-15"/>
    <property type="nucleotide sequence ID" value="NM_001285527.1"/>
</dbReference>
<dbReference type="RefSeq" id="NP_001272457.1">
    <molecule id="P35372-14"/>
    <property type="nucleotide sequence ID" value="NM_001285528.2"/>
</dbReference>
<dbReference type="RefSeq" id="XP_016866395.1">
    <property type="nucleotide sequence ID" value="XM_017010906.1"/>
</dbReference>
<dbReference type="PDB" id="8EF5">
    <property type="method" value="EM"/>
    <property type="resolution" value="3.30 A"/>
    <property type="chains" value="M/R=2-368"/>
</dbReference>
<dbReference type="PDB" id="8EF6">
    <property type="method" value="EM"/>
    <property type="resolution" value="3.20 A"/>
    <property type="chains" value="M/R=2-368"/>
</dbReference>
<dbReference type="PDB" id="8EFB">
    <property type="method" value="EM"/>
    <property type="resolution" value="3.20 A"/>
    <property type="chains" value="R=2-368"/>
</dbReference>
<dbReference type="PDB" id="8EFL">
    <property type="method" value="EM"/>
    <property type="resolution" value="3.20 A"/>
    <property type="chains" value="M/R=2-368"/>
</dbReference>
<dbReference type="PDB" id="8EFO">
    <property type="method" value="EM"/>
    <property type="resolution" value="2.80 A"/>
    <property type="chains" value="M/R=2-368"/>
</dbReference>
<dbReference type="PDB" id="8EFQ">
    <property type="method" value="EM"/>
    <property type="resolution" value="3.30 A"/>
    <property type="chains" value="R=2-368"/>
</dbReference>
<dbReference type="PDB" id="8F7Q">
    <property type="method" value="EM"/>
    <property type="resolution" value="3.22 A"/>
    <property type="chains" value="M/R=2-388"/>
</dbReference>
<dbReference type="PDB" id="8F7R">
    <property type="method" value="EM"/>
    <property type="resolution" value="3.28 A"/>
    <property type="chains" value="M/R=2-388"/>
</dbReference>
<dbReference type="PDB" id="8K9K">
    <property type="method" value="EM"/>
    <property type="resolution" value="2.98 A"/>
    <property type="chains" value="R=64-362"/>
</dbReference>
<dbReference type="PDB" id="8K9L">
    <property type="method" value="EM"/>
    <property type="resolution" value="3.05 A"/>
    <property type="chains" value="R=64-362"/>
</dbReference>
<dbReference type="PDB" id="9MQH">
    <property type="method" value="EM"/>
    <property type="resolution" value="3.90 A"/>
    <property type="chains" value="A=1-400"/>
</dbReference>
<dbReference type="PDB" id="9MQI">
    <property type="method" value="EM"/>
    <property type="resolution" value="3.30 A"/>
    <property type="chains" value="A=1-400"/>
</dbReference>
<dbReference type="PDB" id="9MQJ">
    <property type="method" value="EM"/>
    <property type="resolution" value="3.23 A"/>
    <property type="chains" value="A=1-400"/>
</dbReference>
<dbReference type="PDBsum" id="8EF5"/>
<dbReference type="PDBsum" id="8EF6"/>
<dbReference type="PDBsum" id="8EFB"/>
<dbReference type="PDBsum" id="8EFL"/>
<dbReference type="PDBsum" id="8EFO"/>
<dbReference type="PDBsum" id="8EFQ"/>
<dbReference type="PDBsum" id="8F7Q"/>
<dbReference type="PDBsum" id="8F7R"/>
<dbReference type="PDBsum" id="8K9K"/>
<dbReference type="PDBsum" id="8K9L"/>
<dbReference type="PDBsum" id="9MQH"/>
<dbReference type="PDBsum" id="9MQI"/>
<dbReference type="PDBsum" id="9MQJ"/>
<dbReference type="EMDB" id="EMD-28066"/>
<dbReference type="EMDB" id="EMD-28069"/>
<dbReference type="EMDB" id="EMD-28077"/>
<dbReference type="EMDB" id="EMD-28085"/>
<dbReference type="EMDB" id="EMD-28086"/>
<dbReference type="EMDB" id="EMD-28088"/>
<dbReference type="EMDB" id="EMD-28907"/>
<dbReference type="EMDB" id="EMD-28908"/>
<dbReference type="EMDB" id="EMD-36989"/>
<dbReference type="EMDB" id="EMD-36990"/>
<dbReference type="EMDB" id="EMD-48524"/>
<dbReference type="EMDB" id="EMD-48525"/>
<dbReference type="EMDB" id="EMD-48526"/>
<dbReference type="SMR" id="P35372"/>
<dbReference type="BioGRID" id="111033">
    <property type="interactions" value="137"/>
</dbReference>
<dbReference type="CORUM" id="P35372"/>
<dbReference type="FunCoup" id="P35372">
    <property type="interactions" value="1108"/>
</dbReference>
<dbReference type="IntAct" id="P35372">
    <property type="interactions" value="125"/>
</dbReference>
<dbReference type="MINT" id="P35372"/>
<dbReference type="STRING" id="9606.ENSP00000394624"/>
<dbReference type="BindingDB" id="P35372"/>
<dbReference type="ChEMBL" id="CHEMBL233"/>
<dbReference type="DrugBank" id="DB01571">
    <property type="generic name" value="3-Methylfentanyl"/>
</dbReference>
<dbReference type="DrugBank" id="DB01439">
    <property type="generic name" value="3-Methylthiofentanyl"/>
</dbReference>
<dbReference type="DrugBank" id="DB00802">
    <property type="generic name" value="Alfentanil"/>
</dbReference>
<dbReference type="DrugBank" id="DB06274">
    <property type="generic name" value="Alvimopan"/>
</dbReference>
<dbReference type="DrugBank" id="DB06288">
    <property type="generic name" value="Amisulpride"/>
</dbReference>
<dbReference type="DrugBank" id="DB00321">
    <property type="generic name" value="Amitriptyline"/>
</dbReference>
<dbReference type="DrugBank" id="DB00913">
    <property type="generic name" value="Anileridine"/>
</dbReference>
<dbReference type="DrugBank" id="DB01238">
    <property type="generic name" value="Aripiprazole"/>
</dbReference>
<dbReference type="DrugBank" id="DB12013">
    <property type="generic name" value="Axelopran"/>
</dbReference>
<dbReference type="DrugBank" id="DB15465">
    <property type="generic name" value="Benzhydrocodone"/>
</dbReference>
<dbReference type="DrugBank" id="DB00921">
    <property type="generic name" value="Buprenorphine"/>
</dbReference>
<dbReference type="DrugBank" id="DB00611">
    <property type="generic name" value="Butorphanol"/>
</dbReference>
<dbReference type="DrugBank" id="DB09173">
    <property type="generic name" value="Butyrfentanyl"/>
</dbReference>
<dbReference type="DrugBank" id="DB09061">
    <property type="generic name" value="Cannabidiol"/>
</dbReference>
<dbReference type="DrugBank" id="DB01535">
    <property type="generic name" value="Carfentanil"/>
</dbReference>
<dbReference type="DrugBank" id="DB12830">
    <property type="generic name" value="Cebranopadol"/>
</dbReference>
<dbReference type="DrugBank" id="DB00318">
    <property type="generic name" value="Codeine"/>
</dbReference>
<dbReference type="DrugBank" id="DB08856">
    <property type="generic name" value="DADLE"/>
</dbReference>
<dbReference type="DrugBank" id="DB00514">
    <property type="generic name" value="Dextromethorphan"/>
</dbReference>
<dbReference type="DrugBank" id="DB00647">
    <property type="generic name" value="Dextropropoxyphene"/>
</dbReference>
<dbReference type="DrugBank" id="DB01209">
    <property type="generic name" value="Dezocine"/>
</dbReference>
<dbReference type="DrugBank" id="DB01452">
    <property type="generic name" value="Diamorphine"/>
</dbReference>
<dbReference type="DrugBank" id="DB01501">
    <property type="generic name" value="Difenoxin"/>
</dbReference>
<dbReference type="DrugBank" id="DB01551">
    <property type="generic name" value="Dihydrocodeine"/>
</dbReference>
<dbReference type="DrugBank" id="DB01565">
    <property type="generic name" value="Dihydromorphine"/>
</dbReference>
<dbReference type="DrugBank" id="DB19094">
    <property type="generic name" value="Dimepheptanol"/>
</dbReference>
<dbReference type="DrugBank" id="DB01444">
    <property type="generic name" value="Dimethylthiambutene"/>
</dbReference>
<dbReference type="DrugBank" id="DB01081">
    <property type="generic name" value="Diphenoxylate"/>
</dbReference>
<dbReference type="DrugBank" id="DB01548">
    <property type="generic name" value="Diprenorphine"/>
</dbReference>
<dbReference type="DrugBank" id="DB08861">
    <property type="generic name" value="DPDPE"/>
</dbReference>
<dbReference type="DrugBank" id="DB16146">
    <property type="generic name" value="Dynorphin"/>
</dbReference>
<dbReference type="DrugBank" id="DB09272">
    <property type="generic name" value="Eluxadoline"/>
</dbReference>
<dbReference type="DrugBank" id="DB05492">
    <property type="generic name" value="Epicept NP-1"/>
</dbReference>
<dbReference type="DrugBank" id="DB01466">
    <property type="generic name" value="Ethylmorphine"/>
</dbReference>
<dbReference type="DrugBank" id="DB01462">
    <property type="generic name" value="Etonitazene"/>
</dbReference>
<dbReference type="DrugBank" id="DB01497">
    <property type="generic name" value="Etorphine"/>
</dbReference>
<dbReference type="DrugBank" id="DB00813">
    <property type="generic name" value="Fentanyl"/>
</dbReference>
<dbReference type="DrugBank" id="DB12886">
    <property type="generic name" value="GSK-1521498"/>
</dbReference>
<dbReference type="DrugBank" id="DB00956">
    <property type="generic name" value="Hydrocodone"/>
</dbReference>
<dbReference type="DrugBank" id="DB00327">
    <property type="generic name" value="Hydromorphone"/>
</dbReference>
<dbReference type="DrugBank" id="DB01221">
    <property type="generic name" value="Ketamine"/>
</dbReference>
<dbReference type="DrugBank" id="DB06738">
    <property type="generic name" value="Ketobemidone"/>
</dbReference>
<dbReference type="DrugBank" id="DB01227">
    <property type="generic name" value="Levacetylmethadol"/>
</dbReference>
<dbReference type="DrugBank" id="DB00504">
    <property type="generic name" value="Levallorphan"/>
</dbReference>
<dbReference type="DrugBank" id="DB06793">
    <property type="generic name" value="Levopropoxyphene"/>
</dbReference>
<dbReference type="DrugBank" id="DB00854">
    <property type="generic name" value="Levorphanol"/>
</dbReference>
<dbReference type="DrugBank" id="DB05509">
    <property type="generic name" value="LI-301"/>
</dbReference>
<dbReference type="DrugBank" id="DB09174">
    <property type="generic name" value="Lofentanil"/>
</dbReference>
<dbReference type="DrugBank" id="DB00836">
    <property type="generic name" value="Loperamide"/>
</dbReference>
<dbReference type="DrugBank" id="DB14146">
    <property type="generic name" value="Loxicodegol"/>
</dbReference>
<dbReference type="DrugBank" id="DB14009">
    <property type="generic name" value="Medical Cannabis"/>
</dbReference>
<dbReference type="DrugBank" id="DB00454">
    <property type="generic name" value="Meperidine"/>
</dbReference>
<dbReference type="DrugBank" id="DB12668">
    <property type="generic name" value="Metenkefalin"/>
</dbReference>
<dbReference type="DrugBank" id="DB00333">
    <property type="generic name" value="Methadone"/>
</dbReference>
<dbReference type="DrugBank" id="DB01433">
    <property type="generic name" value="Methadyl acetate"/>
</dbReference>
<dbReference type="DrugBank" id="DB06800">
    <property type="generic name" value="Methylnaltrexone"/>
</dbReference>
<dbReference type="DrugBank" id="DB00295">
    <property type="generic name" value="Morphine"/>
</dbReference>
<dbReference type="DrugBank" id="DB06409">
    <property type="generic name" value="Morphine glucuronide"/>
</dbReference>
<dbReference type="DrugBank" id="DB14011">
    <property type="generic name" value="Nabiximols"/>
</dbReference>
<dbReference type="DrugBank" id="DB00844">
    <property type="generic name" value="Nalbuphine"/>
</dbReference>
<dbReference type="DrugBank" id="DB11691">
    <property type="generic name" value="Naldemedine"/>
</dbReference>
<dbReference type="DrugBank" id="DB06230">
    <property type="generic name" value="Nalmefene"/>
</dbReference>
<dbReference type="DrugBank" id="DB09049">
    <property type="generic name" value="Naloxegol"/>
</dbReference>
<dbReference type="DrugBank" id="DB01183">
    <property type="generic name" value="Naloxone"/>
</dbReference>
<dbReference type="DrugBank" id="DB00704">
    <property type="generic name" value="Naltrexone"/>
</dbReference>
<dbReference type="DrugBank" id="DB14881">
    <property type="generic name" value="Oliceridine"/>
</dbReference>
<dbReference type="DrugBank" id="DB00904">
    <property type="generic name" value="Ondansetron"/>
</dbReference>
<dbReference type="DrugBank" id="DB11130">
    <property type="generic name" value="Opium"/>
</dbReference>
<dbReference type="DrugBank" id="DB16072">
    <property type="generic name" value="ORP-101"/>
</dbReference>
<dbReference type="DrugBank" id="DB00497">
    <property type="generic name" value="Oxycodone"/>
</dbReference>
<dbReference type="DrugBank" id="DB01192">
    <property type="generic name" value="Oxymorphone"/>
</dbReference>
<dbReference type="DrugBank" id="DB00652">
    <property type="generic name" value="Pentazocine"/>
</dbReference>
<dbReference type="DrugBank" id="DB11186">
    <property type="generic name" value="Pentoxyverine"/>
</dbReference>
<dbReference type="DrugBank" id="DB09209">
    <property type="generic name" value="Pholcodine"/>
</dbReference>
<dbReference type="DrugBank" id="DB00899">
    <property type="generic name" value="Remifentanil"/>
</dbReference>
<dbReference type="DrugBank" id="DB12327">
    <property type="generic name" value="Salvinorin A"/>
</dbReference>
<dbReference type="DrugBank" id="DB12543">
    <property type="generic name" value="Samidorphan"/>
</dbReference>
<dbReference type="DrugBank" id="DB09099">
    <property type="generic name" value="Somatostatin"/>
</dbReference>
<dbReference type="DrugBank" id="DB00708">
    <property type="generic name" value="Sufentanil"/>
</dbReference>
<dbReference type="DrugBank" id="DB06204">
    <property type="generic name" value="Tapentadol"/>
</dbReference>
<dbReference type="DrugBank" id="DB09289">
    <property type="generic name" value="Tianeptine"/>
</dbReference>
<dbReference type="DrugBank" id="DB00193">
    <property type="generic name" value="Tramadol"/>
</dbReference>
<dbReference type="DrugBank" id="DB09181">
    <property type="generic name" value="Trefentanil"/>
</dbReference>
<dbReference type="DrugBank" id="DB09089">
    <property type="generic name" value="Trimebutine"/>
</dbReference>
<dbReference type="DrugBank" id="DB05046">
    <property type="generic name" value="V1003"/>
</dbReference>
<dbReference type="DrugCentral" id="P35372"/>
<dbReference type="GuidetoPHARMACOLOGY" id="319"/>
<dbReference type="TCDB" id="9.A.14.13.18">
    <property type="family name" value="the g-protein-coupled receptor (gpcr) family"/>
</dbReference>
<dbReference type="GlyCosmos" id="P35372">
    <property type="glycosylation" value="5 sites, No reported glycans"/>
</dbReference>
<dbReference type="GlyGen" id="P35372">
    <property type="glycosylation" value="5 sites"/>
</dbReference>
<dbReference type="iPTMnet" id="P35372"/>
<dbReference type="PhosphoSitePlus" id="P35372"/>
<dbReference type="SwissPalm" id="P35372"/>
<dbReference type="BioMuta" id="OPRM1"/>
<dbReference type="DMDM" id="2851402"/>
<dbReference type="MassIVE" id="P35372"/>
<dbReference type="PaxDb" id="9606-ENSP00000394624"/>
<dbReference type="PeptideAtlas" id="P35372"/>
<dbReference type="ProteomicsDB" id="55039">
    <molecule id="P35372-10"/>
</dbReference>
<dbReference type="Antibodypedia" id="2929">
    <property type="antibodies" value="602 antibodies from 43 providers"/>
</dbReference>
<dbReference type="DNASU" id="4988"/>
<dbReference type="Ensembl" id="ENST00000229768.9">
    <molecule id="P35372-3"/>
    <property type="protein sequence ID" value="ENSP00000229768.5"/>
    <property type="gene ID" value="ENSG00000112038.18"/>
</dbReference>
<dbReference type="Ensembl" id="ENST00000330432.12">
    <molecule id="P35372-1"/>
    <property type="protein sequence ID" value="ENSP00000328264.7"/>
    <property type="gene ID" value="ENSG00000112038.18"/>
</dbReference>
<dbReference type="Ensembl" id="ENST00000337049.8">
    <molecule id="P35372-5"/>
    <property type="protein sequence ID" value="ENSP00000338381.4"/>
    <property type="gene ID" value="ENSG00000112038.18"/>
</dbReference>
<dbReference type="Ensembl" id="ENST00000414028.6">
    <molecule id="P35372-4"/>
    <property type="protein sequence ID" value="ENSP00000399359.2"/>
    <property type="gene ID" value="ENSG00000112038.18"/>
</dbReference>
<dbReference type="Ensembl" id="ENST00000419506.6">
    <molecule id="P35372-9"/>
    <property type="protein sequence ID" value="ENSP00000403549.2"/>
    <property type="gene ID" value="ENSG00000112038.18"/>
</dbReference>
<dbReference type="Ensembl" id="ENST00000428397.6">
    <molecule id="P35372-2"/>
    <property type="protein sequence ID" value="ENSP00000411903.2"/>
    <property type="gene ID" value="ENSG00000112038.18"/>
</dbReference>
<dbReference type="Ensembl" id="ENST00000434900.6">
    <molecule id="P35372-10"/>
    <property type="protein sequence ID" value="ENSP00000394624.2"/>
    <property type="gene ID" value="ENSG00000112038.18"/>
</dbReference>
<dbReference type="Ensembl" id="ENST00000435918.6">
    <molecule id="P35372-8"/>
    <property type="protein sequence ID" value="ENSP00000413752.2"/>
    <property type="gene ID" value="ENSG00000112038.18"/>
</dbReference>
<dbReference type="Ensembl" id="ENST00000452687.6">
    <molecule id="P35372-7"/>
    <property type="protein sequence ID" value="ENSP00000410497.2"/>
    <property type="gene ID" value="ENSG00000112038.18"/>
</dbReference>
<dbReference type="Ensembl" id="ENST00000518759.5">
    <molecule id="P35372-13"/>
    <property type="protein sequence ID" value="ENSP00000430260.1"/>
    <property type="gene ID" value="ENSG00000112038.18"/>
</dbReference>
<dbReference type="Ensembl" id="ENST00000519083.5">
    <molecule id="P35372-6"/>
    <property type="protein sequence ID" value="ENSP00000431048.1"/>
    <property type="gene ID" value="ENSG00000112038.18"/>
</dbReference>
<dbReference type="Ensembl" id="ENST00000520708.5">
    <molecule id="P35372-12"/>
    <property type="protein sequence ID" value="ENSP00000430876.1"/>
    <property type="gene ID" value="ENSG00000112038.18"/>
</dbReference>
<dbReference type="Ensembl" id="ENST00000522236.1">
    <molecule id="P35372-12"/>
    <property type="protein sequence ID" value="ENSP00000429373.1"/>
    <property type="gene ID" value="ENSG00000112038.18"/>
</dbReference>
<dbReference type="Ensembl" id="ENST00000522555.5">
    <molecule id="P35372-12"/>
    <property type="protein sequence ID" value="ENSP00000429719.1"/>
    <property type="gene ID" value="ENSG00000112038.18"/>
</dbReference>
<dbReference type="Ensembl" id="ENST00000522739.5">
    <molecule id="P35372-6"/>
    <property type="protein sequence ID" value="ENSP00000428018.1"/>
    <property type="gene ID" value="ENSG00000112038.18"/>
</dbReference>
<dbReference type="Ensembl" id="ENST00000524150.2">
    <molecule id="P35372-18"/>
    <property type="protein sequence ID" value="ENSP00000430575.1"/>
    <property type="gene ID" value="ENSG00000112038.18"/>
</dbReference>
<dbReference type="Ensembl" id="ENST00000524163.5">
    <molecule id="P35372-11"/>
    <property type="protein sequence ID" value="ENSP00000430097.1"/>
    <property type="gene ID" value="ENSG00000112038.18"/>
</dbReference>
<dbReference type="GeneID" id="4988"/>
<dbReference type="KEGG" id="hsa:4988"/>
<dbReference type="MANE-Select" id="ENST00000330432.12">
    <property type="protein sequence ID" value="ENSP00000328264.7"/>
    <property type="RefSeq nucleotide sequence ID" value="NM_000914.5"/>
    <property type="RefSeq protein sequence ID" value="NP_000905.3"/>
</dbReference>
<dbReference type="UCSC" id="uc003qpn.4">
    <molecule id="P35372-1"/>
    <property type="organism name" value="human"/>
</dbReference>
<dbReference type="AGR" id="HGNC:8156"/>
<dbReference type="CTD" id="4988"/>
<dbReference type="DisGeNET" id="4988"/>
<dbReference type="GeneCards" id="OPRM1"/>
<dbReference type="HGNC" id="HGNC:8156">
    <property type="gene designation" value="OPRM1"/>
</dbReference>
<dbReference type="HPA" id="ENSG00000112038">
    <property type="expression patterns" value="Tissue enhanced (brain, testis)"/>
</dbReference>
<dbReference type="MalaCards" id="OPRM1"/>
<dbReference type="MIM" id="600018">
    <property type="type" value="gene"/>
</dbReference>
<dbReference type="neXtProt" id="NX_P35372"/>
<dbReference type="OpenTargets" id="ENSG00000112038"/>
<dbReference type="PharmGKB" id="PA31945"/>
<dbReference type="VEuPathDB" id="HostDB:ENSG00000112038"/>
<dbReference type="eggNOG" id="KOG3656">
    <property type="taxonomic scope" value="Eukaryota"/>
</dbReference>
<dbReference type="GeneTree" id="ENSGT00940000158236"/>
<dbReference type="HOGENOM" id="CLU_009579_8_1_1"/>
<dbReference type="InParanoid" id="P35372"/>
<dbReference type="OMA" id="RIRQHTR"/>
<dbReference type="OrthoDB" id="6076970at2759"/>
<dbReference type="PAN-GO" id="P35372">
    <property type="GO annotations" value="10 GO annotations based on evolutionary models"/>
</dbReference>
<dbReference type="PhylomeDB" id="P35372"/>
<dbReference type="TreeFam" id="TF315737"/>
<dbReference type="PathwayCommons" id="P35372"/>
<dbReference type="Reactome" id="R-HSA-111885">
    <property type="pathway name" value="Opioid Signalling"/>
</dbReference>
<dbReference type="Reactome" id="R-HSA-202040">
    <property type="pathway name" value="G-protein activation"/>
</dbReference>
<dbReference type="Reactome" id="R-HSA-375276">
    <property type="pathway name" value="Peptide ligand-binding receptors"/>
</dbReference>
<dbReference type="Reactome" id="R-HSA-418594">
    <property type="pathway name" value="G alpha (i) signalling events"/>
</dbReference>
<dbReference type="Reactome" id="R-HSA-6785807">
    <property type="pathway name" value="Interleukin-4 and Interleukin-13 signaling"/>
</dbReference>
<dbReference type="Reactome" id="R-HSA-9022699">
    <property type="pathway name" value="MECP2 regulates neuronal receptors and channels"/>
</dbReference>
<dbReference type="SignaLink" id="P35372"/>
<dbReference type="SIGNOR" id="P35372"/>
<dbReference type="BioGRID-ORCS" id="4988">
    <property type="hits" value="11 hits in 1151 CRISPR screens"/>
</dbReference>
<dbReference type="ChiTaRS" id="OPRM1">
    <property type="organism name" value="human"/>
</dbReference>
<dbReference type="GeneWiki" id="%CE%9C-opioid_receptor"/>
<dbReference type="GenomeRNAi" id="4988"/>
<dbReference type="Pharos" id="P35372">
    <property type="development level" value="Tclin"/>
</dbReference>
<dbReference type="PRO" id="PR:P35372"/>
<dbReference type="Proteomes" id="UP000005640">
    <property type="component" value="Chromosome 6"/>
</dbReference>
<dbReference type="RNAct" id="P35372">
    <property type="molecule type" value="protein"/>
</dbReference>
<dbReference type="Bgee" id="ENSG00000112038">
    <property type="expression patterns" value="Expressed in primordial germ cell in gonad and 54 other cell types or tissues"/>
</dbReference>
<dbReference type="ExpressionAtlas" id="P35372">
    <property type="expression patterns" value="baseline and differential"/>
</dbReference>
<dbReference type="GO" id="GO:0030424">
    <property type="term" value="C:axon"/>
    <property type="evidence" value="ECO:0000250"/>
    <property type="project" value="UniProtKB"/>
</dbReference>
<dbReference type="GO" id="GO:0030425">
    <property type="term" value="C:dendrite"/>
    <property type="evidence" value="ECO:0000250"/>
    <property type="project" value="UniProtKB"/>
</dbReference>
<dbReference type="GO" id="GO:0005783">
    <property type="term" value="C:endoplasmic reticulum"/>
    <property type="evidence" value="ECO:0000304"/>
    <property type="project" value="ProtInc"/>
</dbReference>
<dbReference type="GO" id="GO:0005768">
    <property type="term" value="C:endosome"/>
    <property type="evidence" value="ECO:0000250"/>
    <property type="project" value="UniProtKB"/>
</dbReference>
<dbReference type="GO" id="GO:0005794">
    <property type="term" value="C:Golgi apparatus"/>
    <property type="evidence" value="ECO:0000304"/>
    <property type="project" value="ProtInc"/>
</dbReference>
<dbReference type="GO" id="GO:0043005">
    <property type="term" value="C:neuron projection"/>
    <property type="evidence" value="ECO:0000318"/>
    <property type="project" value="GO_Central"/>
</dbReference>
<dbReference type="GO" id="GO:0043204">
    <property type="term" value="C:perikaryon"/>
    <property type="evidence" value="ECO:0007669"/>
    <property type="project" value="UniProtKB-SubCell"/>
</dbReference>
<dbReference type="GO" id="GO:0005886">
    <property type="term" value="C:plasma membrane"/>
    <property type="evidence" value="ECO:0000250"/>
    <property type="project" value="UniProtKB"/>
</dbReference>
<dbReference type="GO" id="GO:0045202">
    <property type="term" value="C:synapse"/>
    <property type="evidence" value="ECO:0007669"/>
    <property type="project" value="GOC"/>
</dbReference>
<dbReference type="GO" id="GO:0004979">
    <property type="term" value="F:beta-endorphin receptor activity"/>
    <property type="evidence" value="ECO:0000315"/>
    <property type="project" value="UniProtKB"/>
</dbReference>
<dbReference type="GO" id="GO:0004930">
    <property type="term" value="F:G protein-coupled receptor activity"/>
    <property type="evidence" value="ECO:0000250"/>
    <property type="project" value="UniProtKB"/>
</dbReference>
<dbReference type="GO" id="GO:0001965">
    <property type="term" value="F:G-protein alpha-subunit binding"/>
    <property type="evidence" value="ECO:0000314"/>
    <property type="project" value="UniProtKB"/>
</dbReference>
<dbReference type="GO" id="GO:0031681">
    <property type="term" value="F:G-protein beta-subunit binding"/>
    <property type="evidence" value="ECO:0000318"/>
    <property type="project" value="GO_Central"/>
</dbReference>
<dbReference type="GO" id="GO:0038047">
    <property type="term" value="F:morphine receptor activity"/>
    <property type="evidence" value="ECO:0000250"/>
    <property type="project" value="UniProtKB"/>
</dbReference>
<dbReference type="GO" id="GO:0042923">
    <property type="term" value="F:neuropeptide binding"/>
    <property type="evidence" value="ECO:0000318"/>
    <property type="project" value="GO_Central"/>
</dbReference>
<dbReference type="GO" id="GO:0005245">
    <property type="term" value="F:voltage-gated calcium channel activity"/>
    <property type="evidence" value="ECO:0000250"/>
    <property type="project" value="UniProtKB"/>
</dbReference>
<dbReference type="GO" id="GO:0007197">
    <property type="term" value="P:adenylate cyclase-inhibiting G protein-coupled acetylcholine receptor signaling pathway"/>
    <property type="evidence" value="ECO:0000250"/>
    <property type="project" value="UniProtKB"/>
</dbReference>
<dbReference type="GO" id="GO:0007193">
    <property type="term" value="P:adenylate cyclase-inhibiting G protein-coupled receptor signaling pathway"/>
    <property type="evidence" value="ECO:0000314"/>
    <property type="project" value="UniProtKB"/>
</dbReference>
<dbReference type="GO" id="GO:0048149">
    <property type="term" value="P:behavioral response to ethanol"/>
    <property type="evidence" value="ECO:0000315"/>
    <property type="project" value="UniProtKB"/>
</dbReference>
<dbReference type="GO" id="GO:0038003">
    <property type="term" value="P:G protein-coupled opioid receptor signaling pathway"/>
    <property type="evidence" value="ECO:0000250"/>
    <property type="project" value="UniProtKB"/>
</dbReference>
<dbReference type="GO" id="GO:0007186">
    <property type="term" value="P:G protein-coupled receptor signaling pathway"/>
    <property type="evidence" value="ECO:0000314"/>
    <property type="project" value="UniProtKB"/>
</dbReference>
<dbReference type="GO" id="GO:0007187">
    <property type="term" value="P:G protein-coupled receptor signaling pathway, coupled to cyclic nucleotide second messenger"/>
    <property type="evidence" value="ECO:0000304"/>
    <property type="project" value="ProtInc"/>
</dbReference>
<dbReference type="GO" id="GO:0008285">
    <property type="term" value="P:negative regulation of cell population proliferation"/>
    <property type="evidence" value="ECO:0000304"/>
    <property type="project" value="ProtInc"/>
</dbReference>
<dbReference type="GO" id="GO:0051481">
    <property type="term" value="P:negative regulation of cytosolic calcium ion concentration"/>
    <property type="evidence" value="ECO:0000314"/>
    <property type="project" value="UniProtKB"/>
</dbReference>
<dbReference type="GO" id="GO:0045019">
    <property type="term" value="P:negative regulation of nitric oxide biosynthetic process"/>
    <property type="evidence" value="ECO:0000314"/>
    <property type="project" value="UniProtKB"/>
</dbReference>
<dbReference type="GO" id="GO:0061358">
    <property type="term" value="P:negative regulation of Wnt protein secretion"/>
    <property type="evidence" value="ECO:0000315"/>
    <property type="project" value="UniProtKB"/>
</dbReference>
<dbReference type="GO" id="GO:0007218">
    <property type="term" value="P:neuropeptide signaling pathway"/>
    <property type="evidence" value="ECO:0000318"/>
    <property type="project" value="GO_Central"/>
</dbReference>
<dbReference type="GO" id="GO:0007200">
    <property type="term" value="P:phospholipase C-activating G protein-coupled receptor signaling pathway"/>
    <property type="evidence" value="ECO:0000250"/>
    <property type="project" value="UniProtKB"/>
</dbReference>
<dbReference type="GO" id="GO:0070374">
    <property type="term" value="P:positive regulation of ERK1 and ERK2 cascade"/>
    <property type="evidence" value="ECO:0000250"/>
    <property type="project" value="UniProtKB"/>
</dbReference>
<dbReference type="GO" id="GO:0050769">
    <property type="term" value="P:positive regulation of neurogenesis"/>
    <property type="evidence" value="ECO:0000250"/>
    <property type="project" value="UniProtKB"/>
</dbReference>
<dbReference type="GO" id="GO:0080135">
    <property type="term" value="P:regulation of cellular response to stress"/>
    <property type="evidence" value="ECO:0000315"/>
    <property type="project" value="UniProtKB"/>
</dbReference>
<dbReference type="GO" id="GO:2000310">
    <property type="term" value="P:regulation of NMDA receptor activity"/>
    <property type="evidence" value="ECO:0000250"/>
    <property type="project" value="UniProtKB"/>
</dbReference>
<dbReference type="GO" id="GO:0007600">
    <property type="term" value="P:sensory perception"/>
    <property type="evidence" value="ECO:0000303"/>
    <property type="project" value="UniProtKB"/>
</dbReference>
<dbReference type="GO" id="GO:0019233">
    <property type="term" value="P:sensory perception of pain"/>
    <property type="evidence" value="ECO:0000250"/>
    <property type="project" value="UniProtKB"/>
</dbReference>
<dbReference type="CDD" id="cd15090">
    <property type="entry name" value="7tmA_Mu_opioid_R"/>
    <property type="match status" value="1"/>
</dbReference>
<dbReference type="FunFam" id="1.20.1070.10:FF:000014">
    <property type="entry name" value="Kappa-type opioid receptor 1"/>
    <property type="match status" value="1"/>
</dbReference>
<dbReference type="Gene3D" id="1.20.1070.10">
    <property type="entry name" value="Rhodopsin 7-helix transmembrane proteins"/>
    <property type="match status" value="1"/>
</dbReference>
<dbReference type="InterPro" id="IPR000276">
    <property type="entry name" value="GPCR_Rhodpsn"/>
</dbReference>
<dbReference type="InterPro" id="IPR017452">
    <property type="entry name" value="GPCR_Rhodpsn_7TM"/>
</dbReference>
<dbReference type="InterPro" id="IPR000105">
    <property type="entry name" value="Mu_opioid_rcpt"/>
</dbReference>
<dbReference type="InterPro" id="IPR001418">
    <property type="entry name" value="Opioid_rcpt"/>
</dbReference>
<dbReference type="PANTHER" id="PTHR24229:SF7">
    <property type="entry name" value="MU-TYPE OPIOID RECEPTOR"/>
    <property type="match status" value="1"/>
</dbReference>
<dbReference type="PANTHER" id="PTHR24229">
    <property type="entry name" value="NEUROPEPTIDES RECEPTOR"/>
    <property type="match status" value="1"/>
</dbReference>
<dbReference type="Pfam" id="PF00001">
    <property type="entry name" value="7tm_1"/>
    <property type="match status" value="1"/>
</dbReference>
<dbReference type="PRINTS" id="PR00237">
    <property type="entry name" value="GPCRRHODOPSN"/>
</dbReference>
<dbReference type="PRINTS" id="PR00537">
    <property type="entry name" value="MUOPIOIDR"/>
</dbReference>
<dbReference type="PRINTS" id="PR00384">
    <property type="entry name" value="OPIOIDR"/>
</dbReference>
<dbReference type="SUPFAM" id="SSF81321">
    <property type="entry name" value="Family A G protein-coupled receptor-like"/>
    <property type="match status" value="1"/>
</dbReference>
<dbReference type="PROSITE" id="PS00237">
    <property type="entry name" value="G_PROTEIN_RECEP_F1_1"/>
    <property type="match status" value="1"/>
</dbReference>
<dbReference type="PROSITE" id="PS50262">
    <property type="entry name" value="G_PROTEIN_RECEP_F1_2"/>
    <property type="match status" value="1"/>
</dbReference>
<feature type="chain" id="PRO_0000069972" description="Mu-type opioid receptor">
    <location>
        <begin position="1"/>
        <end position="400"/>
    </location>
</feature>
<feature type="topological domain" description="Extracellular" evidence="2">
    <location>
        <begin position="1"/>
        <end position="68"/>
    </location>
</feature>
<feature type="transmembrane region" description="Helical; Name=1" evidence="2">
    <location>
        <begin position="69"/>
        <end position="93"/>
    </location>
</feature>
<feature type="topological domain" description="Cytoplasmic" evidence="2">
    <location>
        <begin position="94"/>
        <end position="106"/>
    </location>
</feature>
<feature type="transmembrane region" description="Helical; Name=2" evidence="2">
    <location>
        <begin position="107"/>
        <end position="131"/>
    </location>
</feature>
<feature type="topological domain" description="Extracellular" evidence="2">
    <location>
        <begin position="132"/>
        <end position="142"/>
    </location>
</feature>
<feature type="transmembrane region" description="Helical; Name=3" evidence="2">
    <location>
        <begin position="143"/>
        <end position="165"/>
    </location>
</feature>
<feature type="topological domain" description="Cytoplasmic" evidence="2">
    <location>
        <begin position="166"/>
        <end position="185"/>
    </location>
</feature>
<feature type="transmembrane region" description="Helical; Name=4" evidence="2">
    <location>
        <begin position="186"/>
        <end position="207"/>
    </location>
</feature>
<feature type="topological domain" description="Extracellular" evidence="2">
    <location>
        <begin position="208"/>
        <end position="230"/>
    </location>
</feature>
<feature type="transmembrane region" description="Helical; Name=5" evidence="2">
    <location>
        <begin position="231"/>
        <end position="255"/>
    </location>
</feature>
<feature type="topological domain" description="Cytoplasmic" evidence="2">
    <location>
        <begin position="256"/>
        <end position="279"/>
    </location>
</feature>
<feature type="transmembrane region" description="Helical; Name=6" evidence="2">
    <location>
        <begin position="280"/>
        <end position="306"/>
    </location>
</feature>
<feature type="topological domain" description="Extracellular" evidence="2">
    <location>
        <begin position="307"/>
        <end position="314"/>
    </location>
</feature>
<feature type="transmembrane region" description="Helical; Name=7" evidence="2">
    <location>
        <begin position="315"/>
        <end position="338"/>
    </location>
</feature>
<feature type="topological domain" description="Cytoplasmic" evidence="2">
    <location>
        <begin position="339"/>
        <end position="400"/>
    </location>
</feature>
<feature type="short sequence motif" description="NPxxY; plays a role in stabilizing the activated conformation of the receptor" evidence="2">
    <location>
        <begin position="334"/>
        <end position="338"/>
    </location>
</feature>
<feature type="modified residue" description="Phosphotyrosine" evidence="1">
    <location>
        <position position="168"/>
    </location>
</feature>
<feature type="modified residue" description="Phosphoserine" evidence="2">
    <location>
        <position position="365"/>
    </location>
</feature>
<feature type="modified residue" description="Phosphothreonine" evidence="1">
    <location>
        <position position="372"/>
    </location>
</feature>
<feature type="modified residue" description="Phosphoserine" evidence="1">
    <location>
        <position position="377"/>
    </location>
</feature>
<feature type="modified residue" description="Phosphothreonine" evidence="1">
    <location>
        <position position="396"/>
    </location>
</feature>
<feature type="lipid moiety-binding region" description="S-palmitoyl cysteine" evidence="4">
    <location>
        <position position="353"/>
    </location>
</feature>
<feature type="glycosylation site" description="N-linked (GlcNAc...) asparagine" evidence="4">
    <location>
        <position position="9"/>
    </location>
</feature>
<feature type="glycosylation site" description="N-linked (GlcNAc...) asparagine" evidence="4">
    <location>
        <position position="12"/>
    </location>
</feature>
<feature type="glycosylation site" description="N-linked (GlcNAc...) asparagine" evidence="4">
    <location>
        <position position="33"/>
    </location>
</feature>
<feature type="glycosylation site" description="N-linked (GlcNAc...) asparagine" evidence="4">
    <location>
        <position position="40"/>
    </location>
</feature>
<feature type="glycosylation site" description="N-linked (GlcNAc...) asparagine" evidence="4">
    <location>
        <position position="48"/>
    </location>
</feature>
<feature type="disulfide bond" evidence="5">
    <location>
        <begin position="142"/>
        <end position="219"/>
    </location>
</feature>
<feature type="splice variant" id="VSP_042327" description="In isoform 12, isoform 14 and isoform 15." evidence="33 35 36 40">
    <location>
        <begin position="1"/>
        <end position="100"/>
    </location>
</feature>
<feature type="splice variant" id="VSP_042328" description="In isoform 13." evidence="35">
    <original>MDSSAAPTNASNCTDALAYSSCSPAPSPGSWVNLSHLDGNLSDPCGPNRTDLGGRDSLCPPTGSPSMITAITIMALYSIVCVVGLFGNFLVMYVIV</original>
    <variation>MMRAKSISTKAGKPS</variation>
    <location>
        <begin position="1"/>
        <end position="96"/>
    </location>
</feature>
<feature type="splice variant" id="VSP_037693" description="In isoform 10." evidence="35 39">
    <original>M</original>
    <variation>MCLHRRVPSEETYSLDRFAQNPPLFPPPSLPASESRMAHAPLLQRCGAARTGFCKKQQELWQRRKEAAEALGTRKVSVLLATSHSGARPAVSTM</variation>
    <location>
        <position position="1"/>
    </location>
</feature>
<feature type="splice variant" id="VSP_042329" description="In isoform 17." evidence="42">
    <original>RYTKMKTATNIYIFNLALADALATSTLPFQSVNYLMGTWPFGTILCKIVISIDYYNMFTSIFTLCTMSVDRYIAVCHPVKALDFRTPRNAKIINVCNWILSSAIGLPVMFMATTKYRQGSIDCTLTFSHPTWYWENLLKICVFIFAFIMPVLIITVCYGLMILRLKSVRMLSGSKEKDRNLRRITRMVLVVVAVFIVCWTPIHIYVIIKALVTIPETTFQTVSWHFCIALGYTNSCLNPVLYAFLDENFKRCFREFCIPTSSNIEQQNSTRIRQNTRDHPSTANTVDRTNHQLENLEAETAPLP</original>
    <variation>SSSWF</variation>
    <location>
        <begin position="97"/>
        <end position="400"/>
    </location>
</feature>
<feature type="splice variant" id="VSP_042330" description="In isoform 16." evidence="42">
    <original>YTKMKTATNIYIFNLALADALATSTLPFQSVNYLMGTWPFGTILCKIVISIDYYNMFTSIFTLCTMSVDRYIAVCHPVKALDFRTPRNAKIINVCNWILSSAIGLPVMFMATTKYRQGSIDCTLTFSHPTWYWENLLKICVFIFAFIMPVLIITVCYGLMILRLKSVRMLSGSKEKDRNLRRITRMVLVVVAVFIVCWTPIHIYVIIKALVTIPETTFQTVSWHFCIALGYTNSCLNPVLYAFLDENFKRCFREFCIPTSSNIEQQNSTRIRQNTRDHPSTANTVDRTNHQLENLEAETAPLP</original>
    <variation>YSWFVIGGPEGRRKQRRLGEDKRARGCGEKG</variation>
    <location>
        <begin position="98"/>
        <end position="400"/>
    </location>
</feature>
<feature type="splice variant" id="VSP_047577" description="In isoform 18." evidence="41">
    <original>YTKMKTATNIYIFNLALADALATSTLPFQSVNYLMGTWPFGTILCKIVISIDYYNMFTSIFTLCTMSVDRYIAVCHPVKALDFRTPRNA</original>
    <variation>FHRLYTNILSSNLVLGKPAEDLCFHLRLHYASAHHYRVLWTDDLAPQECPHALWLQRKGQESSKDHQDGAGGGGCVHRLLDSHSHLRHH</variation>
    <location>
        <begin position="98"/>
        <end position="186"/>
    </location>
</feature>
<feature type="splice variant" id="VSP_047578" description="In isoform 18." evidence="41">
    <location>
        <begin position="187"/>
        <end position="400"/>
    </location>
</feature>
<feature type="splice variant" id="VSP_037694" description="In isoform 11." evidence="34">
    <original>LENLEAETAPLP</original>
    <variation>S</variation>
    <location>
        <begin position="389"/>
        <end position="400"/>
    </location>
</feature>
<feature type="splice variant" id="VSP_042331" description="In isoform 14." evidence="33">
    <original>LENLEAETAPLP</original>
    <variation>NYYIIHRCCCNTPLISQKPVLLWFCD</variation>
    <location>
        <begin position="389"/>
        <end position="400"/>
    </location>
</feature>
<feature type="splice variant" id="VSP_001896" description="In isoform 2 and isoform 15." evidence="34 38 40">
    <original>LENLEAETAPLP</original>
    <variation>VRSL</variation>
    <location>
        <begin position="389"/>
        <end position="400"/>
    </location>
</feature>
<feature type="splice variant" id="VSP_037695" description="In isoform 3." evidence="32">
    <original>LENLEAETAPLP</original>
    <variation>CLPIPSLSCWALEQGCLVVYPGPLQGPLVRYDLPAILHSSCLRGNTAPSPSGGAFLLS</variation>
    <location>
        <begin position="389"/>
        <end position="400"/>
    </location>
</feature>
<feature type="splice variant" id="VSP_037696" description="In isoform 4." evidence="34">
    <original>LENLEAETAPLP</original>
    <variation>GPPAKFVADQLAGSS</variation>
    <location>
        <begin position="389"/>
        <end position="400"/>
    </location>
</feature>
<feature type="splice variant" id="VSP_037697" description="In isoform 5." evidence="32">
    <original>LENLEAETAPLP</original>
    <variation>PPLAVSMAQIFTRYPPPTHREKTCNDYMKR</variation>
    <location>
        <begin position="389"/>
        <end position="400"/>
    </location>
</feature>
<feature type="splice variant" id="VSP_037698" description="In isoform 6." evidence="34 39 40">
    <original>LENLEAETAPLP</original>
    <variation>IRDPISNLPRVSVF</variation>
    <location>
        <begin position="389"/>
        <end position="400"/>
    </location>
</feature>
<feature type="splice variant" id="VSP_037699" description="In isoform 7." evidence="34">
    <original>LENLEAETAPLP</original>
    <variation>KIDLFQKSSLLNCEHTKG</variation>
    <location>
        <begin position="389"/>
        <end position="400"/>
    </location>
</feature>
<feature type="splice variant" id="VSP_037700" description="In isoform 8." evidence="34">
    <original>LENLEAETAPLP</original>
    <variation>RERRQKSDW</variation>
    <location>
        <begin position="389"/>
        <end position="400"/>
    </location>
</feature>
<feature type="splice variant" id="VSP_037701" description="In isoform 9." evidence="34">
    <original>LENLEAETAPLP</original>
    <variation>VELNLDCHCENAKPWPLSYNAGQSPFPFPGRV</variation>
    <location>
        <begin position="389"/>
        <end position="400"/>
    </location>
</feature>
<feature type="sequence variant" id="VAR_009525" description="In dbSNP:rs1799972." evidence="27 28 29 30">
    <original>A</original>
    <variation>V</variation>
    <location>
        <position position="6"/>
    </location>
</feature>
<feature type="sequence variant" id="VAR_009524" description="In dbSNP:rs1799971." evidence="26 27 28 29">
    <original>N</original>
    <variation>D</variation>
    <location>
        <position position="40"/>
    </location>
</feature>
<feature type="sequence variant" id="VAR_049426" description="In dbSNP:rs9282817.">
    <original>G</original>
    <variation>V</variation>
    <location>
        <position position="63"/>
    </location>
</feature>
<feature type="sequence variant" id="VAR_049427" description="In dbSNP:rs9282819.">
    <original>S</original>
    <variation>F</variation>
    <location>
        <position position="66"/>
    </location>
</feature>
<feature type="sequence variant" id="VAR_009526" description="In dbSNP:rs17174794." evidence="27 29">
    <original>S</original>
    <variation>C</variation>
    <location>
        <position position="147"/>
    </location>
</feature>
<feature type="sequence variant" id="VAR_019252" description="In dbSNP:rs17174801." evidence="29">
    <original>N</original>
    <variation>D</variation>
    <location>
        <position position="152"/>
    </location>
</feature>
<feature type="sequence variant" id="VAR_009527" description="In dbSNP:rs1799974." evidence="28">
    <original>R</original>
    <variation>H</variation>
    <location>
        <position position="260"/>
    </location>
</feature>
<feature type="sequence variant" id="VAR_019253" description="In dbSNP:rs17174822." evidence="29">
    <original>R</original>
    <variation>C</variation>
    <location>
        <position position="265"/>
    </location>
</feature>
<feature type="sequence variant" id="VAR_019254" description="In dbSNP:rs17174829." evidence="29">
    <original>D</original>
    <variation>N</variation>
    <location>
        <position position="274"/>
    </location>
</feature>
<feature type="sequence variant" id="VAR_082952" evidence="16">
    <location>
        <begin position="388"/>
        <end position="400"/>
    </location>
</feature>
<feature type="mutagenesis site" description="Abolishes ligand binding; when associated with A-219 or S-219." evidence="7">
    <original>C</original>
    <variation>A</variation>
    <variation>S</variation>
    <location>
        <position position="142"/>
    </location>
</feature>
<feature type="mutagenesis site" description="Abolishes ligand binding; when associated with A-142 or S-142." evidence="7">
    <original>C</original>
    <variation>A</variation>
    <variation>S</variation>
    <location>
        <position position="219"/>
    </location>
</feature>
<feature type="mutagenesis site" description="Impairs interaction with calmodulin." evidence="6 8">
    <original>K</original>
    <variation>A</variation>
    <location>
        <position position="273"/>
    </location>
</feature>
<feature type="mutagenesis site" description="Impairs interaction with calmodulin." evidence="8">
    <original>R</original>
    <variation>A</variation>
    <location>
        <position position="275"/>
    </location>
</feature>
<feature type="sequence conflict" description="In Ref. 11; BAG36624." evidence="42" ref="11">
    <original>P</original>
    <variation>L</variation>
    <location>
        <position position="26"/>
    </location>
</feature>
<feature type="sequence conflict" description="In Ref. 1; AAA20580." evidence="42" ref="1">
    <original>D</original>
    <variation>N</variation>
    <location>
        <position position="51"/>
    </location>
</feature>
<feature type="sequence conflict" description="In Ref. 6; AAQ77391." evidence="42" ref="6">
    <original>I</original>
    <variation>V</variation>
    <location>
        <position position="109"/>
    </location>
</feature>
<feature type="sequence conflict" description="In Ref. 2; AAB60354." evidence="42" ref="2">
    <original>M</original>
    <variation>I</variation>
    <location>
        <position position="207"/>
    </location>
</feature>
<feature type="sequence conflict" description="In Ref. 1; AAA20580." evidence="42" ref="1">
    <original>L</original>
    <variation>V</variation>
    <location>
        <position position="234"/>
    </location>
</feature>
<feature type="helix" evidence="43">
    <location>
        <begin position="68"/>
        <end position="97"/>
    </location>
</feature>
<feature type="turn" evidence="43">
    <location>
        <begin position="98"/>
        <end position="101"/>
    </location>
</feature>
<feature type="helix" evidence="43">
    <location>
        <begin position="104"/>
        <end position="132"/>
    </location>
</feature>
<feature type="helix" evidence="43">
    <location>
        <begin position="139"/>
        <end position="172"/>
    </location>
</feature>
<feature type="helix" evidence="43">
    <location>
        <begin position="174"/>
        <end position="180"/>
    </location>
</feature>
<feature type="helix" evidence="43">
    <location>
        <begin position="183"/>
        <end position="207"/>
    </location>
</feature>
<feature type="strand" evidence="43">
    <location>
        <begin position="208"/>
        <end position="213"/>
    </location>
</feature>
<feature type="strand" evidence="43">
    <location>
        <begin position="216"/>
        <end position="221"/>
    </location>
</feature>
<feature type="helix" evidence="43">
    <location>
        <begin position="227"/>
        <end position="242"/>
    </location>
</feature>
<feature type="helix" evidence="43">
    <location>
        <begin position="244"/>
        <end position="263"/>
    </location>
</feature>
<feature type="turn" evidence="43">
    <location>
        <begin position="265"/>
        <end position="267"/>
    </location>
</feature>
<feature type="strand" evidence="43">
    <location>
        <begin position="268"/>
        <end position="270"/>
    </location>
</feature>
<feature type="helix" evidence="43">
    <location>
        <begin position="271"/>
        <end position="307"/>
    </location>
</feature>
<feature type="helix" evidence="43">
    <location>
        <begin position="314"/>
        <end position="338"/>
    </location>
</feature>
<feature type="turn" evidence="43">
    <location>
        <begin position="339"/>
        <end position="341"/>
    </location>
</feature>
<feature type="helix" evidence="43">
    <location>
        <begin position="343"/>
        <end position="351"/>
    </location>
</feature>
<feature type="sequence conflict" description="In Ref. 4; AAK74189." evidence="42" ref="4">
    <original>Q</original>
    <variation>H</variation>
    <location sequence="P35372-3">
        <position position="402"/>
    </location>
</feature>
<feature type="sequence variant" id="VAR_082953" evidence="16">
    <location sequence="P35372-9">
        <begin position="411"/>
        <end position="420"/>
    </location>
</feature>
<evidence type="ECO:0000250" key="1">
    <source>
        <dbReference type="UniProtKB" id="P33535"/>
    </source>
</evidence>
<evidence type="ECO:0000250" key="2">
    <source>
        <dbReference type="UniProtKB" id="P42866"/>
    </source>
</evidence>
<evidence type="ECO:0000250" key="3">
    <source>
        <dbReference type="UniProtKB" id="P97266"/>
    </source>
</evidence>
<evidence type="ECO:0000255" key="4"/>
<evidence type="ECO:0000255" key="5">
    <source>
        <dbReference type="PROSITE-ProRule" id="PRU00521"/>
    </source>
</evidence>
<evidence type="ECO:0000269" key="6">
    <source>
    </source>
</evidence>
<evidence type="ECO:0000269" key="7">
    <source>
    </source>
</evidence>
<evidence type="ECO:0000269" key="8">
    <source>
    </source>
</evidence>
<evidence type="ECO:0000269" key="9">
    <source>
    </source>
</evidence>
<evidence type="ECO:0000269" key="10">
    <source>
    </source>
</evidence>
<evidence type="ECO:0000269" key="11">
    <source>
    </source>
</evidence>
<evidence type="ECO:0000269" key="12">
    <source>
    </source>
</evidence>
<evidence type="ECO:0000269" key="13">
    <source>
    </source>
</evidence>
<evidence type="ECO:0000269" key="14">
    <source>
    </source>
</evidence>
<evidence type="ECO:0000269" key="15">
    <source>
    </source>
</evidence>
<evidence type="ECO:0000269" key="16">
    <source>
    </source>
</evidence>
<evidence type="ECO:0000269" key="17">
    <source>
    </source>
</evidence>
<evidence type="ECO:0000269" key="18">
    <source>
    </source>
</evidence>
<evidence type="ECO:0000269" key="19">
    <source>
    </source>
</evidence>
<evidence type="ECO:0000269" key="20">
    <source>
    </source>
</evidence>
<evidence type="ECO:0000269" key="21">
    <source>
    </source>
</evidence>
<evidence type="ECO:0000269" key="22">
    <source>
    </source>
</evidence>
<evidence type="ECO:0000269" key="23">
    <source>
    </source>
</evidence>
<evidence type="ECO:0000269" key="24">
    <source>
    </source>
</evidence>
<evidence type="ECO:0000269" key="25">
    <source>
    </source>
</evidence>
<evidence type="ECO:0000269" key="26">
    <source>
    </source>
</evidence>
<evidence type="ECO:0000269" key="27">
    <source>
    </source>
</evidence>
<evidence type="ECO:0000269" key="28">
    <source>
    </source>
</evidence>
<evidence type="ECO:0000269" key="29">
    <source ref="13"/>
</evidence>
<evidence type="ECO:0000269" key="30">
    <source ref="18"/>
</evidence>
<evidence type="ECO:0000303" key="31">
    <source>
    </source>
</evidence>
<evidence type="ECO:0000303" key="32">
    <source>
    </source>
</evidence>
<evidence type="ECO:0000303" key="33">
    <source>
    </source>
</evidence>
<evidence type="ECO:0000303" key="34">
    <source>
    </source>
</evidence>
<evidence type="ECO:0000303" key="35">
    <source>
    </source>
</evidence>
<evidence type="ECO:0000303" key="36">
    <source>
    </source>
</evidence>
<evidence type="ECO:0000303" key="37">
    <source>
    </source>
</evidence>
<evidence type="ECO:0000303" key="38">
    <source>
    </source>
</evidence>
<evidence type="ECO:0000303" key="39">
    <source ref="14"/>
</evidence>
<evidence type="ECO:0000303" key="40">
    <source ref="8"/>
</evidence>
<evidence type="ECO:0000303" key="41">
    <source ref="9"/>
</evidence>
<evidence type="ECO:0000305" key="42"/>
<evidence type="ECO:0007829" key="43">
    <source>
        <dbReference type="PDB" id="8EFO"/>
    </source>
</evidence>
<accession>P35372</accession>
<accession>B0FXJ1</accession>
<accession>B2R9S7</accession>
<accession>B8Q1L7</accession>
<accession>B8Q1L8</accession>
<accession>B8Q1L9</accession>
<accession>E7EWZ3</accession>
<accession>G8XRH6</accession>
<accession>G8XRH8</accession>
<accession>Q12930</accession>
<accession>Q4VWM1</accession>
<accession>Q4VWM2</accession>
<accession>Q4VWM3</accession>
<accession>Q4VWM4</accession>
<accession>Q4VWM6</accession>
<accession>Q4VWX6</accession>
<accession>Q5TDA1</accession>
<accession>Q6UPP1</accession>
<accession>Q6UQ80</accession>
<accession>Q7Z2D8</accession>
<accession>Q86V80</accession>
<accession>Q8IWW3</accession>
<accession>Q8IWW4</accession>
<accession>Q9UCZ4</accession>
<accession>Q9UN57</accession>